<protein>
    <recommendedName>
        <fullName>Genome polyprotein</fullName>
    </recommendedName>
    <component>
        <recommendedName>
            <fullName>Peptide 2k</fullName>
        </recommendedName>
    </component>
    <component>
        <recommendedName>
            <fullName>Capsid protein C</fullName>
        </recommendedName>
        <alternativeName>
            <fullName>Core protein</fullName>
        </alternativeName>
    </component>
    <component>
        <recommendedName>
            <fullName>Protein prM</fullName>
        </recommendedName>
    </component>
    <component>
        <recommendedName>
            <fullName>Peptide pr</fullName>
        </recommendedName>
    </component>
    <component>
        <recommendedName>
            <fullName>Small envelope protein M</fullName>
        </recommendedName>
        <alternativeName>
            <fullName>Matrix protein</fullName>
        </alternativeName>
    </component>
    <component>
        <recommendedName>
            <fullName>Envelope protein E</fullName>
        </recommendedName>
    </component>
    <component>
        <recommendedName>
            <fullName>Non-structural protein 1</fullName>
            <shortName>NS1</shortName>
        </recommendedName>
    </component>
    <component>
        <recommendedName>
            <fullName>Non-structural protein 2A</fullName>
            <shortName>NS2A</shortName>
        </recommendedName>
    </component>
    <component>
        <recommendedName>
            <fullName>Serine protease subunit NS2B</fullName>
        </recommendedName>
        <alternativeName>
            <fullName>Flavivirin protease NS2B regulatory subunit</fullName>
        </alternativeName>
        <alternativeName>
            <fullName>Non-structural protein 2B</fullName>
        </alternativeName>
    </component>
    <component>
        <recommendedName>
            <fullName>Serine protease NS3</fullName>
            <ecNumber>3.4.21.91</ecNumber>
            <ecNumber evidence="21">3.6.1.15</ecNumber>
            <ecNumber evidence="21">3.6.4.13</ecNumber>
        </recommendedName>
        <alternativeName>
            <fullName>Flavivirin protease NS3 catalytic subunit</fullName>
        </alternativeName>
        <alternativeName>
            <fullName>Non-structural protein 3</fullName>
        </alternativeName>
    </component>
    <component>
        <recommendedName>
            <fullName>Non-structural protein 4A</fullName>
            <shortName>NS4A</shortName>
        </recommendedName>
    </component>
    <component>
        <recommendedName>
            <fullName>Non-structural protein 4B</fullName>
            <shortName>NS4B</shortName>
        </recommendedName>
    </component>
    <component>
        <recommendedName>
            <fullName>RNA-directed RNA polymerase NS5</fullName>
            <ecNumber evidence="18">2.1.1.56</ecNumber>
            <ecNumber evidence="18">2.1.1.57</ecNumber>
            <ecNumber evidence="13">2.7.7.48</ecNumber>
        </recommendedName>
        <alternativeName>
            <fullName>Non-structural protein 5</fullName>
        </alternativeName>
    </component>
</protein>
<reference key="1">
    <citation type="journal article" date="1999" name="J. Gen. Virol.">
        <title>Characterization of infectious Murray Valley encephalitis virus derived from a stably cloned genomic-length cDNA.</title>
        <authorList>
            <person name="Hurrelbrink R.J."/>
            <person name="Nestorowicz A."/>
            <person name="McMinn P.C."/>
        </authorList>
    </citation>
    <scope>NUCLEOTIDE SEQUENCE [GENOMIC RNA]</scope>
</reference>
<reference key="2">
    <citation type="journal article" date="1986" name="J. Mol. Biol.">
        <title>Partial nucleotide sequence of the Murray Valley encephalitis virus genome. Comparison of the encoded polypeptides with yellow fever virus structural and non-structural proteins.</title>
        <authorList>
            <person name="Dalgarno L."/>
            <person name="Trent D.W."/>
            <person name="Strauss J.H."/>
            <person name="Rice C.M."/>
        </authorList>
    </citation>
    <scope>NUCLEOTIDE SEQUENCE [GENOMIC RNA] OF 1-1780</scope>
</reference>
<reference key="3">
    <citation type="journal article" date="1990" name="Virus Genes">
        <title>Sequence of the 3' half of the Murray Valley encephalitis virus genome and mapping of the nonstructural proteins NS1, NS3, and NS5.</title>
        <authorList>
            <person name="Lee E."/>
            <person name="Fernon C."/>
            <person name="Simpson R."/>
            <person name="Weir R.C."/>
            <person name="Rice C.M."/>
            <person name="Dalgarno L."/>
        </authorList>
    </citation>
    <scope>NUCLEOTIDE SEQUENCE OF 1773-3434</scope>
    <scope>PROTEIN SEQUENCE OF 794-807; 1504-1519 AND 2530-2537</scope>
</reference>
<reference key="4">
    <citation type="journal article" date="1987" name="Virology">
        <title>Studies on the glycosylation of flavivirus E proteins and the role of carbohydrate in antigenic structure.</title>
        <authorList>
            <person name="Winkler G."/>
            <person name="Heinz F.X."/>
            <person name="Kunz C."/>
        </authorList>
    </citation>
    <scope>GLYCOSYLATION (ENVELOPE PROTEIN E)</scope>
</reference>
<reference key="5">
    <citation type="journal article" date="1993" name="Proc. Natl. Acad. Sci. U.S.A.">
        <title>Flavivirus premembrane protein cleavage and spike heterodimer secretion require the function of the viral proteinase NS3.</title>
        <authorList>
            <person name="Lobigs M."/>
        </authorList>
    </citation>
    <scope>PROTEOLYTIC CLEAVAGE (GENOME POLYPROTEIN)</scope>
</reference>
<reference key="6">
    <citation type="journal article" date="1998" name="J. Virol.">
        <title>Signal peptidase cleavage at the flavivirus C-prM junction: dependence on the viral NS2B-3 protease for efficient processing requires determinants in C, the signal peptide, and prM.</title>
        <authorList>
            <person name="Stocks C.E."/>
            <person name="Lobigs M."/>
        </authorList>
    </citation>
    <scope>PROTEOLYTIC CLEAVAGE (GENOME POLYPROTEIN)</scope>
    <scope>MUTAGENESIS OF 121-GLY--ALA-124</scope>
</reference>
<reference key="7">
    <citation type="journal article" date="1995" name="J. Virol.">
        <title>Posttranslational signal peptidase cleavage at the flavivirus C-prM junction in vitro.</title>
        <authorList>
            <person name="Stocks C.E."/>
            <person name="Lobigs M."/>
        </authorList>
    </citation>
    <scope>PROTEOLYTIC CLEAVAGE (GENOME POLYPROTEIN)</scope>
</reference>
<reference key="8">
    <citation type="journal article" date="2001" name="J. Gen. Virol.">
        <title>Determination of the intramolecular disulfide bond arrangement and biochemical identification of the glycosylation sites of the nonstructural protein NS1 of Murray Valley encephalitis virus.</title>
        <authorList>
            <person name="Blitvich B.J."/>
            <person name="Scanlon D."/>
            <person name="Shiell B.J."/>
            <person name="Mackenzie J.S."/>
            <person name="Pham K."/>
            <person name="Hall R.A."/>
        </authorList>
    </citation>
    <scope>GLYCOSYLATION (NON-STRUCTURAL PROTEIN 1)</scope>
    <scope>DISULFIDE BONDS</scope>
</reference>
<reference key="9">
    <citation type="journal article" date="2010" name="Virology">
        <title>A flavivirus signal peptide balances the catalytic activity of two proteases and thereby facilitates virus morphogenesis.</title>
        <authorList>
            <person name="Lobigs M."/>
            <person name="Lee E."/>
            <person name="Ng M.L."/>
            <person name="Pavy M."/>
            <person name="Lobigs P."/>
        </authorList>
    </citation>
    <scope>PROTEOLYTIC CLEAVAGE (GENOME POLYPROTEIN)</scope>
</reference>
<reference key="10">
    <citation type="journal article" date="2015" name="Virol. J.">
        <title>Proteolytic cleavage analysis at the Murray Valley encephalitis virus NS1-2A junction.</title>
        <authorList>
            <person name="Addis S.N."/>
            <person name="Lee E."/>
            <person name="Bettadapura J."/>
            <person name="Lobigs M."/>
        </authorList>
    </citation>
    <scope>PROTEOLYTIC CLEAVAGE (GENOME POLYPROTEIN)</scope>
</reference>
<reference key="11">
    <citation type="journal article" date="2007" name="Protein Sci.">
        <title>Structure of the Murray Valley encephalitis virus RNA helicase at 1.9 Angstrom resolution.</title>
        <authorList>
            <person name="Mancini E.J."/>
            <person name="Assenberg R."/>
            <person name="Verma A."/>
            <person name="Walter T.S."/>
            <person name="Tuma R."/>
            <person name="Grimes J.M."/>
            <person name="Owens R.J."/>
            <person name="Stuart D.I."/>
        </authorList>
    </citation>
    <scope>X-RAY CRYSTALLOGRAPHY (1.9 ANGSTROMS) OF 1681-2122</scope>
</reference>
<reference key="12">
    <citation type="journal article" date="2007" name="J. Gen. Virol.">
        <title>Crystal structure of the Murray Valley encephalitis virus NS5 methyltransferase domain in complex with cap analogues.</title>
        <authorList>
            <person name="Assenberg R."/>
            <person name="Ren J."/>
            <person name="Verma A."/>
            <person name="Walter T.S."/>
            <person name="Alderton D."/>
            <person name="Hurrelbrink R.J."/>
            <person name="Fuller S.D."/>
            <person name="Bressanelli S."/>
            <person name="Owens R.J."/>
            <person name="Stuart D.I."/>
            <person name="Grimes J.M."/>
        </authorList>
    </citation>
    <scope>X-RAY CRYSTALLOGRAPHY (2.0 ANGSTROMS) OF 2530-2798</scope>
</reference>
<reference key="13">
    <citation type="journal article" date="2009" name="J. Virol.">
        <title>Crystal structure of a novel conformational state of the flavivirus NS3 protein: implications for polyprotein processing and viral replication.</title>
        <authorList>
            <person name="Assenberg R."/>
            <person name="Mastrangelo E."/>
            <person name="Walter T.S."/>
            <person name="Verma A."/>
            <person name="Milani M."/>
            <person name="Owens R.J."/>
            <person name="Stuart D.I."/>
            <person name="Grimes J.M."/>
            <person name="Mancini E.J."/>
        </authorList>
    </citation>
    <scope>X-RAY CRYSTALLOGRAPHY (2.75 ANGSTROMS) OF 1421-2122</scope>
    <scope>CATALYTIC ACTIVITY (SERINE PROTEASE NS3)</scope>
    <scope>FUNCTION (SERINE PROTEASE NS3)</scope>
</reference>
<proteinExistence type="evidence at protein level"/>
<accession>P05769</accession>
<accession>Q9Q9F7</accession>
<keyword id="KW-0002">3D-structure</keyword>
<keyword id="KW-0007">Acetylation</keyword>
<keyword id="KW-1072">Activation of host autophagy by virus</keyword>
<keyword id="KW-0067">ATP-binding</keyword>
<keyword id="KW-0167">Capsid protein</keyword>
<keyword id="KW-1165">Clathrin-mediated endocytosis of virus by host</keyword>
<keyword id="KW-0165">Cleavage on pair of basic residues</keyword>
<keyword id="KW-0903">Direct protein sequencing</keyword>
<keyword id="KW-1015">Disulfide bond</keyword>
<keyword id="KW-1170">Fusion of virus membrane with host endosomal membrane</keyword>
<keyword id="KW-1168">Fusion of virus membrane with host membrane</keyword>
<keyword id="KW-0325">Glycoprotein</keyword>
<keyword id="KW-0347">Helicase</keyword>
<keyword id="KW-1035">Host cytoplasm</keyword>
<keyword id="KW-1038">Host endoplasmic reticulum</keyword>
<keyword id="KW-1043">Host membrane</keyword>
<keyword id="KW-1048">Host nucleus</keyword>
<keyword id="KW-0945">Host-virus interaction</keyword>
<keyword id="KW-0378">Hydrolase</keyword>
<keyword id="KW-1090">Inhibition of host innate immune response by virus</keyword>
<keyword id="KW-1114">Inhibition of host interferon signaling pathway by virus</keyword>
<keyword id="KW-1105">Inhibition of host STAT1 by virus</keyword>
<keyword id="KW-1106">Inhibition of host STAT2 by virus</keyword>
<keyword id="KW-0922">Interferon antiviral system evasion</keyword>
<keyword id="KW-0472">Membrane</keyword>
<keyword id="KW-0479">Metal-binding</keyword>
<keyword id="KW-0489">Methyltransferase</keyword>
<keyword id="KW-0506">mRNA capping</keyword>
<keyword id="KW-0507">mRNA processing</keyword>
<keyword id="KW-0511">Multifunctional enzyme</keyword>
<keyword id="KW-0547">Nucleotide-binding</keyword>
<keyword id="KW-0548">Nucleotidyltransferase</keyword>
<keyword id="KW-0597">Phosphoprotein</keyword>
<keyword id="KW-0645">Protease</keyword>
<keyword id="KW-0694">RNA-binding</keyword>
<keyword id="KW-0696">RNA-directed RNA polymerase</keyword>
<keyword id="KW-0949">S-adenosyl-L-methionine</keyword>
<keyword id="KW-0964">Secreted</keyword>
<keyword id="KW-0720">Serine protease</keyword>
<keyword id="KW-0941">Suppressor of RNA silencing</keyword>
<keyword id="KW-0804">Transcription</keyword>
<keyword id="KW-0805">Transcription regulation</keyword>
<keyword id="KW-0808">Transferase</keyword>
<keyword id="KW-0812">Transmembrane</keyword>
<keyword id="KW-1133">Transmembrane helix</keyword>
<keyword id="KW-1161">Viral attachment to host cell</keyword>
<keyword id="KW-0261">Viral envelope protein</keyword>
<keyword id="KW-0899">Viral immunoevasion</keyword>
<keyword id="KW-1162">Viral penetration into host cytoplasm</keyword>
<keyword id="KW-0693">Viral RNA replication</keyword>
<keyword id="KW-0946">Virion</keyword>
<keyword id="KW-1164">Virus endocytosis by host</keyword>
<keyword id="KW-1160">Virus entry into host cell</keyword>
<keyword id="KW-0862">Zinc</keyword>
<sequence length="3434" mass="380577">MSKKPGGPGKPRVVNMLKRGIPRVFPLVGVKRVVMNLLDGRGPIRFVLALLAFFRFTALAPTKALMRRWKSVNKTTAMKHLTSFKKELGTLIDVVNKRGKKQKKRGGSETSVLMLIFMLIGFAAALKLSTFQGKIMMTVNATDIADVIAIPTPKGPNQCWIRAIDIGFMCDDTITYECPKLESGNDPEDIDCWCDKQAVYVNYGRCTRARHSKRSRRSITVQTHGESTLVNKKDAWLDSTKATRYLTKTENWIIRNPGYALVAVVLGWMLGSNTGQKVIFTVLLLLVAPAYSFNCLGMSSRDFIEGASGATWVDLVLEGDSCITIMAADKPTLDIRMMNIEATNLALVRNYCYAATVSDVSTVSNCPTTGESHNTKRADHNYLCKRGVTDRGWGNGCGLFGKGSIDTCAKFTCSNSAAGRLILPEDIKYEVGVFVHGSTDSTSHGNYSTQIGANQAVRFTISPNAPAITAKMGDYGEVTVECEPRSGLNTEAYYVMTIGTKHFLVHREWFNDLLLPWTSPASTEWRNREILVEFEEPHATKQSVVALGSQEGALHQALAGAIPVEFSSSTLKLTSGHLKCRVKMEKLKLKGTTYGMCTEKFTFSKNPADTGHGTVVLELQYTGSDGPCKIPISSVASLNDMTPVGRMVTANPYVASSTANAKVLVEIEPPFGDSYIVVGRGDKQINHHWHKEGSSIGKAFSTTLKGAQRLAALGDTAWDFGSVGGVFNSIGKAVHQVFGGAFRTLFGGMSWISPGLLGALLLWMGVNARDKSIALAFLATGGVLLFLATNVHADTGCAIDITRRELKCGSGIFIHNDVEAWIDRYKYLPETPKQLAKVVENAHKSGICGIRSVNRFEHQMWESVRDELNALLKENAIDLSVVVEKQKGMYRAAPNRLRLTVEELDIGWKAWGKSLLFAAELANSTFVVDGPETAECPNSKRAWNSFEIEDFGFGITSTRGWLKLREENTSECDSTIIGTAVKGNHAVHSDLSYWIESGLNGTWKLERAIFGEVKSCTWPETHTLWGDAVEETELIIPVTLAGPRSKHNRREGYKVQVQGPWDEEDIKLDFDYCPGTTVTVSEHCGKRGPSVRTTTDSGKLVTDWCCRSCTLPPLRFTTASGCWYGMEIRPMKHDESTLVKSRVQAFNGDMIDPFQLGLLVMFLATQEVLRKRWTARLTLPAAVGALLVLLLGGITYTDLVRYLILVGSAFAESNNGGDVIHLALIAVFKVQPAFLVASLTRSRWTNQENLVLVLGAAFFQMAASDLELTIPGLLNSAATAWMVLRAMAFPSTSAIAMPMLAMLAPGMRMLHLDTYRIVLLLIGICSLLNERRRSVEKKKGAVLIGLALTSTGYFSPTIMAAGLMICNPNKKRGWPATEVLTAVGLMFAIVGGLAELDIDSMSVPFTIAGLMLVSYVISGKATDMWLERAADVSWEAGAAITGTSERLDVQLDDDGDFHLLNDPGVPWKIWVLRMTCLSVAAITPRAILPSAFGYWLTLKYTKRGGVFWDTPSPKVYPKGDTTPGVYRIMARGILGRYQAGVGVMHEGVFHTLWHTTRGAAIMSGEGRLTPYWGNVKEDRVTYGGPWKLDQKWNGVDDVQMIVVEPGKPAINVQTKPGIFKTAHGEIGAVSLDYPIGTSGSPIVNSNGEIIGLYGNGVILGNGAYVSAIVQGERVEEPVPEAYNPEMLKKRQLTVLDLHPGAGKTRRILPQIIKDAIQKRLRTAVLAPTRVVAAEMAEALRGLPVRYLTPAVQREHSGNEIVDVMCHATLTHRLMSPLRVPNYNLFVMDEAHFTDPASIAARGYIATRVEAGEAAAIFMTATPPGTSDPFPDTNSPVHDVSSEIPDRAWSSGFEWITDYAGKTVWFVASVKMSNEIAQCLQRAGKRVIQLNRKSYDTEYPKCKNGDWDFVITTDISEMGANFGASRVIDCRKSVKPTILDEGEGRVILSVPSAITSASAAQRRGRVGRNPSQIGDEYHYGGGTSEDDTMLAHWTEAKILLDNIHLPNGLVAQLYGPERDKTYTMDGEYRLRGEERKTFLELIKTADLPVWLAYKVASNGIQYNDRKWCFDGPRSNIILEDNNEVEIITRIGERKVLKPRWLDARVYSDHQSLKWFKDFAAGKRSAIGFFEVLGRMPEHFAGKTREALDTMYLVATSEKGGKAHRMALEELPDALETITLIAALGVMTAGFFLLMMQRKGIGKLGLGALVLVVATFFLWMSDVSGTKIAGVLLLALLMMVVLIPEPEKQRSQTDNQLAVFLICVLLVVGLVAANEYGMLERTKTDIRNLFGKSLIEENEVHIPPFDFFTLDLKPATAWALYGGSTVVLTPLIKHLVTSQYVTTSLASINAQAGSLFTLPKGIPFTDFDLSVALVFLGCWGQVTLTTLIMATILVTLHYGYLLPGWQAEALRAAQKRTAAGIMKNAVVDGIVATDVPELERTTPQMQKRLGQILLVLASVAAVCVNPRITTIREAGILCTAAALTLWDNNASAAWNSTTATGLCHVMRGSWIAGASIAWTLIKNAEKPAFKRGRAGGRTLGEQWKEKLNAMGKEEFFSYRKEAILEVDRTEARRARREGNKVGGHPVSRGTAKLRWLVERRFVQPIGKVVDLGCGRGGWSYYAATMKNVQEVRGYTKGGPGHEEPMLMQSYGWNIVTMKSGVDVFYKPSEISDTLLCDIGESSPSAEIEEQRTLRILEMVSDWLSRGPKEFCIKILCPYMPKVIEKLESLQRRFGGGLVRVPLSRNSNHEMYWVSGASGNIVHAVNMTSQVLIGRMDKKIWKGPKYEEDVNLGSGTRAVGKGVQHTDYKRIKSRIEKLKEEYAATWHTDDNHPYRTWTYHGSYEVKPSGSASTLVNGVVRLLSKPWDAITGVTTMAMTDTTPFGQQRVFKEKVDTKAPEPPQGVKTVMDETTNWLWAYLARNKKARLCTREEFVKKVNSHAALGAMFEEQNQWKNAREAVEDPKFWEMVDEERECHLRGECRTCIYNMMGKREKKPGEFGKAKGSRAIWFMWLGARFLEFEALGFLNEDHWMSRENSGGGVEGAGIQKLGYILRDVAQKPGGKIYADDTAGWDTRITQADLENEAKVLELMEGEQRTLARAIIELTYRHKVVKVMRPAAGGKTVMDVISREDQRGSGQVVTYALNTFTNIAVQLVRLMEAEAVIGPDDIESIERKKKFAVRTWLFENAEERVQRMAVSGDDCVVKPLDDRFSTALHFLNAMSKVRKDIQEWKPSQGWYDWQQVPFCSNHFQEVIMKDGRTLVVPCRGQDELIGRARISPGSGWNVRDTACLAKAYAQMWLVLYFHRRDLRLMANAICSSVPVDWVPTGRTTWSIHGKGEWMTTEDMLSVWNRVWILENEWMEDKTTVSDWTEVPYVGKREDIWCGSLIGTRTRATWAENIYAAINQVRSVIGKEKYVDYVQSLRRYEETHVSEDRVL</sequence>
<organismHost>
    <name type="scientific">Culex annulirostris</name>
    <name type="common">Common banded mosquito</name>
    <dbReference type="NCBI Taxonomy" id="162997"/>
</organismHost>
<organismHost>
    <name type="scientific">Homo sapiens</name>
    <name type="common">Human</name>
    <dbReference type="NCBI Taxonomy" id="9606"/>
</organismHost>
<dbReference type="EC" id="3.4.21.91"/>
<dbReference type="EC" id="3.6.1.15" evidence="21"/>
<dbReference type="EC" id="3.6.4.13" evidence="21"/>
<dbReference type="EC" id="2.1.1.56" evidence="18"/>
<dbReference type="EC" id="2.1.1.57" evidence="18"/>
<dbReference type="EC" id="2.7.7.48" evidence="13"/>
<dbReference type="EMBL" id="AF161266">
    <property type="protein sequence ID" value="AAF05296.1"/>
    <property type="molecule type" value="Genomic_RNA"/>
</dbReference>
<dbReference type="EMBL" id="X03467">
    <property type="protein sequence ID" value="CAA27184.1"/>
    <property type="molecule type" value="Unassigned_RNA"/>
</dbReference>
<dbReference type="PIR" id="A24635">
    <property type="entry name" value="GNWVMV"/>
</dbReference>
<dbReference type="RefSeq" id="NP_051124.1">
    <property type="nucleotide sequence ID" value="NC_000943.1"/>
</dbReference>
<dbReference type="PDB" id="2PX2">
    <property type="method" value="X-ray"/>
    <property type="resolution" value="2.00 A"/>
    <property type="chains" value="A/B=2530-2798"/>
</dbReference>
<dbReference type="PDB" id="2PX4">
    <property type="method" value="X-ray"/>
    <property type="resolution" value="2.20 A"/>
    <property type="chains" value="A=2530-2798"/>
</dbReference>
<dbReference type="PDB" id="2PX5">
    <property type="method" value="X-ray"/>
    <property type="resolution" value="2.30 A"/>
    <property type="chains" value="A/B=2530-2798"/>
</dbReference>
<dbReference type="PDB" id="2PX8">
    <property type="method" value="X-ray"/>
    <property type="resolution" value="2.20 A"/>
    <property type="chains" value="A/B=2530-2798"/>
</dbReference>
<dbReference type="PDB" id="2PXA">
    <property type="method" value="X-ray"/>
    <property type="resolution" value="2.30 A"/>
    <property type="chains" value="A/B=2530-2798"/>
</dbReference>
<dbReference type="PDB" id="2PXC">
    <property type="method" value="X-ray"/>
    <property type="resolution" value="2.80 A"/>
    <property type="chains" value="A=2530-2798"/>
</dbReference>
<dbReference type="PDB" id="2V8O">
    <property type="method" value="X-ray"/>
    <property type="resolution" value="1.90 A"/>
    <property type="chains" value="A=1681-2122"/>
</dbReference>
<dbReference type="PDB" id="2WV9">
    <property type="method" value="X-ray"/>
    <property type="resolution" value="2.75 A"/>
    <property type="chains" value="A=1421-1465, A=1504-2122"/>
</dbReference>
<dbReference type="PDBsum" id="2PX2"/>
<dbReference type="PDBsum" id="2PX4"/>
<dbReference type="PDBsum" id="2PX5"/>
<dbReference type="PDBsum" id="2PX8"/>
<dbReference type="PDBsum" id="2PXA"/>
<dbReference type="PDBsum" id="2PXC"/>
<dbReference type="PDBsum" id="2V8O"/>
<dbReference type="PDBsum" id="2WV9"/>
<dbReference type="BMRB" id="P05769"/>
<dbReference type="SMR" id="P05769"/>
<dbReference type="MEROPS" id="S07.003"/>
<dbReference type="iPTMnet" id="P05769"/>
<dbReference type="GeneID" id="1489715"/>
<dbReference type="KEGG" id="vg:1489715"/>
<dbReference type="BRENDA" id="3.4.21.91">
    <property type="organism ID" value="14117"/>
</dbReference>
<dbReference type="BRENDA" id="3.6.4.13">
    <property type="organism ID" value="14117"/>
</dbReference>
<dbReference type="EvolutionaryTrace" id="P05769"/>
<dbReference type="Proteomes" id="UP000008863">
    <property type="component" value="Segment"/>
</dbReference>
<dbReference type="GO" id="GO:0005576">
    <property type="term" value="C:extracellular region"/>
    <property type="evidence" value="ECO:0007669"/>
    <property type="project" value="UniProtKB-SubCell"/>
</dbReference>
<dbReference type="GO" id="GO:0044167">
    <property type="term" value="C:host cell endoplasmic reticulum membrane"/>
    <property type="evidence" value="ECO:0007669"/>
    <property type="project" value="UniProtKB-SubCell"/>
</dbReference>
<dbReference type="GO" id="GO:0042025">
    <property type="term" value="C:host cell nucleus"/>
    <property type="evidence" value="ECO:0007669"/>
    <property type="project" value="UniProtKB-SubCell"/>
</dbReference>
<dbReference type="GO" id="GO:0044220">
    <property type="term" value="C:host cell perinuclear region of cytoplasm"/>
    <property type="evidence" value="ECO:0007669"/>
    <property type="project" value="UniProtKB-SubCell"/>
</dbReference>
<dbReference type="GO" id="GO:0016020">
    <property type="term" value="C:membrane"/>
    <property type="evidence" value="ECO:0007669"/>
    <property type="project" value="UniProtKB-KW"/>
</dbReference>
<dbReference type="GO" id="GO:0019028">
    <property type="term" value="C:viral capsid"/>
    <property type="evidence" value="ECO:0007669"/>
    <property type="project" value="UniProtKB-KW"/>
</dbReference>
<dbReference type="GO" id="GO:0019031">
    <property type="term" value="C:viral envelope"/>
    <property type="evidence" value="ECO:0007669"/>
    <property type="project" value="UniProtKB-KW"/>
</dbReference>
<dbReference type="GO" id="GO:0055036">
    <property type="term" value="C:virion membrane"/>
    <property type="evidence" value="ECO:0007669"/>
    <property type="project" value="UniProtKB-SubCell"/>
</dbReference>
<dbReference type="GO" id="GO:0005524">
    <property type="term" value="F:ATP binding"/>
    <property type="evidence" value="ECO:0007669"/>
    <property type="project" value="UniProtKB-KW"/>
</dbReference>
<dbReference type="GO" id="GO:0016887">
    <property type="term" value="F:ATP hydrolysis activity"/>
    <property type="evidence" value="ECO:0007669"/>
    <property type="project" value="RHEA"/>
</dbReference>
<dbReference type="GO" id="GO:0003725">
    <property type="term" value="F:double-stranded RNA binding"/>
    <property type="evidence" value="ECO:0007669"/>
    <property type="project" value="InterPro"/>
</dbReference>
<dbReference type="GO" id="GO:0046872">
    <property type="term" value="F:metal ion binding"/>
    <property type="evidence" value="ECO:0007669"/>
    <property type="project" value="UniProtKB-KW"/>
</dbReference>
<dbReference type="GO" id="GO:0004483">
    <property type="term" value="F:mRNA (nucleoside-2'-O-)-methyltransferase activity"/>
    <property type="evidence" value="ECO:0007669"/>
    <property type="project" value="UniProtKB-EC"/>
</dbReference>
<dbReference type="GO" id="GO:0004482">
    <property type="term" value="F:mRNA 5'-cap (guanine-N7-)-methyltransferase activity"/>
    <property type="evidence" value="ECO:0007669"/>
    <property type="project" value="UniProtKB-EC"/>
</dbReference>
<dbReference type="GO" id="GO:0046983">
    <property type="term" value="F:protein dimerization activity"/>
    <property type="evidence" value="ECO:0007669"/>
    <property type="project" value="InterPro"/>
</dbReference>
<dbReference type="GO" id="GO:0003724">
    <property type="term" value="F:RNA helicase activity"/>
    <property type="evidence" value="ECO:0007669"/>
    <property type="project" value="UniProtKB-EC"/>
</dbReference>
<dbReference type="GO" id="GO:0003968">
    <property type="term" value="F:RNA-directed RNA polymerase activity"/>
    <property type="evidence" value="ECO:0007669"/>
    <property type="project" value="UniProtKB-KW"/>
</dbReference>
<dbReference type="GO" id="GO:0004252">
    <property type="term" value="F:serine-type endopeptidase activity"/>
    <property type="evidence" value="ECO:0007669"/>
    <property type="project" value="InterPro"/>
</dbReference>
<dbReference type="GO" id="GO:0005198">
    <property type="term" value="F:structural molecule activity"/>
    <property type="evidence" value="ECO:0007669"/>
    <property type="project" value="InterPro"/>
</dbReference>
<dbReference type="GO" id="GO:0075512">
    <property type="term" value="P:clathrin-dependent endocytosis of virus by host cell"/>
    <property type="evidence" value="ECO:0007669"/>
    <property type="project" value="UniProtKB-KW"/>
</dbReference>
<dbReference type="GO" id="GO:0039654">
    <property type="term" value="P:fusion of virus membrane with host endosome membrane"/>
    <property type="evidence" value="ECO:0007669"/>
    <property type="project" value="UniProtKB-KW"/>
</dbReference>
<dbReference type="GO" id="GO:0006508">
    <property type="term" value="P:proteolysis"/>
    <property type="evidence" value="ECO:0007669"/>
    <property type="project" value="UniProtKB-KW"/>
</dbReference>
<dbReference type="GO" id="GO:0039520">
    <property type="term" value="P:symbiont-mediated activation of host autophagy"/>
    <property type="evidence" value="ECO:0007669"/>
    <property type="project" value="UniProtKB-KW"/>
</dbReference>
<dbReference type="GO" id="GO:0052170">
    <property type="term" value="P:symbiont-mediated suppression of host innate immune response"/>
    <property type="evidence" value="ECO:0007669"/>
    <property type="project" value="UniProtKB-KW"/>
</dbReference>
<dbReference type="GO" id="GO:0039563">
    <property type="term" value="P:symbiont-mediated suppression of host JAK-STAT cascade via inhibition of STAT1 activity"/>
    <property type="evidence" value="ECO:0007669"/>
    <property type="project" value="UniProtKB-KW"/>
</dbReference>
<dbReference type="GO" id="GO:0039564">
    <property type="term" value="P:symbiont-mediated suppression of host JAK-STAT cascade via inhibition of STAT2 activity"/>
    <property type="evidence" value="ECO:0007669"/>
    <property type="project" value="UniProtKB-KW"/>
</dbReference>
<dbReference type="GO" id="GO:0039502">
    <property type="term" value="P:symbiont-mediated suppression of host type I interferon-mediated signaling pathway"/>
    <property type="evidence" value="ECO:0007669"/>
    <property type="project" value="UniProtKB-KW"/>
</dbReference>
<dbReference type="GO" id="GO:0039694">
    <property type="term" value="P:viral RNA genome replication"/>
    <property type="evidence" value="ECO:0007669"/>
    <property type="project" value="InterPro"/>
</dbReference>
<dbReference type="GO" id="GO:0019062">
    <property type="term" value="P:virion attachment to host cell"/>
    <property type="evidence" value="ECO:0007669"/>
    <property type="project" value="UniProtKB-KW"/>
</dbReference>
<dbReference type="CDD" id="cd20761">
    <property type="entry name" value="capping_2-OMTase_Flaviviridae"/>
    <property type="match status" value="1"/>
</dbReference>
<dbReference type="CDD" id="cd17931">
    <property type="entry name" value="DEXHc_viral_Ns3"/>
    <property type="match status" value="1"/>
</dbReference>
<dbReference type="CDD" id="cd12149">
    <property type="entry name" value="Flavi_E_C"/>
    <property type="match status" value="1"/>
</dbReference>
<dbReference type="CDD" id="cd17038">
    <property type="entry name" value="Flavi_M"/>
    <property type="match status" value="1"/>
</dbReference>
<dbReference type="CDD" id="cd23204">
    <property type="entry name" value="Flavivirus_RdRp"/>
    <property type="match status" value="1"/>
</dbReference>
<dbReference type="CDD" id="cd18806">
    <property type="entry name" value="SF2_C_viral"/>
    <property type="match status" value="1"/>
</dbReference>
<dbReference type="DisProt" id="DP02212"/>
<dbReference type="FunFam" id="1.20.1280.260:FF:000001">
    <property type="entry name" value="Envelope glycoprotein"/>
    <property type="match status" value="1"/>
</dbReference>
<dbReference type="FunFam" id="2.60.40.350:FF:000001">
    <property type="entry name" value="Envelope glycoprotein"/>
    <property type="match status" value="1"/>
</dbReference>
<dbReference type="FunFam" id="1.10.260.90:FF:000001">
    <property type="entry name" value="Genome polyprotein"/>
    <property type="match status" value="1"/>
</dbReference>
<dbReference type="FunFam" id="1.10.8.970:FF:000003">
    <property type="entry name" value="Genome polyprotein"/>
    <property type="match status" value="1"/>
</dbReference>
<dbReference type="FunFam" id="2.60.260.50:FF:000001">
    <property type="entry name" value="Genome polyprotein"/>
    <property type="match status" value="1"/>
</dbReference>
<dbReference type="FunFam" id="3.30.70.2840:FF:000001">
    <property type="entry name" value="Genome polyprotein"/>
    <property type="match status" value="1"/>
</dbReference>
<dbReference type="FunFam" id="3.30.70.2840:FF:000002">
    <property type="entry name" value="Genome polyprotein"/>
    <property type="match status" value="1"/>
</dbReference>
<dbReference type="FunFam" id="3.40.50.150:FF:000105">
    <property type="entry name" value="Genome polyprotein"/>
    <property type="match status" value="1"/>
</dbReference>
<dbReference type="FunFam" id="3.40.50.300:FF:000763">
    <property type="entry name" value="Genome polyprotein"/>
    <property type="match status" value="1"/>
</dbReference>
<dbReference type="Gene3D" id="1.10.10.930">
    <property type="match status" value="1"/>
</dbReference>
<dbReference type="Gene3D" id="1.10.260.90">
    <property type="match status" value="1"/>
</dbReference>
<dbReference type="Gene3D" id="1.20.1280.260">
    <property type="match status" value="1"/>
</dbReference>
<dbReference type="Gene3D" id="2.40.10.120">
    <property type="match status" value="2"/>
</dbReference>
<dbReference type="Gene3D" id="2.60.40.350">
    <property type="match status" value="1"/>
</dbReference>
<dbReference type="Gene3D" id="1.10.8.970">
    <property type="entry name" value="Flavivirus envelope glycoprotein M-like"/>
    <property type="match status" value="1"/>
</dbReference>
<dbReference type="Gene3D" id="2.60.260.50">
    <property type="entry name" value="Flavivirus polyprotein propeptide domain"/>
    <property type="match status" value="1"/>
</dbReference>
<dbReference type="Gene3D" id="3.30.70.2840">
    <property type="entry name" value="Flavivirus RNA-directed RNA polymerase, thumb domain"/>
    <property type="match status" value="3"/>
</dbReference>
<dbReference type="Gene3D" id="3.40.50.300">
    <property type="entry name" value="P-loop containing nucleotide triphosphate hydrolases"/>
    <property type="match status" value="2"/>
</dbReference>
<dbReference type="Gene3D" id="2.60.98.10">
    <property type="entry name" value="Tick-borne Encephalitis virus Glycoprotein, domain 1"/>
    <property type="match status" value="1"/>
</dbReference>
<dbReference type="Gene3D" id="3.40.50.150">
    <property type="entry name" value="Vaccinia Virus protein VP39"/>
    <property type="match status" value="1"/>
</dbReference>
<dbReference type="Gene3D" id="3.30.67.10">
    <property type="entry name" value="Viral Envelope Glycoprotein, domain 2"/>
    <property type="match status" value="1"/>
</dbReference>
<dbReference type="Gene3D" id="3.30.387.10">
    <property type="entry name" value="Viral Envelope Glycoprotein, domain 3"/>
    <property type="match status" value="1"/>
</dbReference>
<dbReference type="InterPro" id="IPR043502">
    <property type="entry name" value="DNA/RNA_pol_sf"/>
</dbReference>
<dbReference type="InterPro" id="IPR000069">
    <property type="entry name" value="Env_glycoprot_M_flavivir"/>
</dbReference>
<dbReference type="InterPro" id="IPR038302">
    <property type="entry name" value="Env_glycoprot_M_sf_flavivir"/>
</dbReference>
<dbReference type="InterPro" id="IPR013755">
    <property type="entry name" value="Flav_gly_cen_dom_subdom1"/>
</dbReference>
<dbReference type="InterPro" id="IPR001122">
    <property type="entry name" value="Flavi_capsidC"/>
</dbReference>
<dbReference type="InterPro" id="IPR037172">
    <property type="entry name" value="Flavi_capsidC_sf"/>
</dbReference>
<dbReference type="InterPro" id="IPR011492">
    <property type="entry name" value="Flavi_DEAD"/>
</dbReference>
<dbReference type="InterPro" id="IPR027287">
    <property type="entry name" value="Flavi_E_Ig-like"/>
</dbReference>
<dbReference type="InterPro" id="IPR026470">
    <property type="entry name" value="Flavi_E_Stem/Anchor_dom"/>
</dbReference>
<dbReference type="InterPro" id="IPR038345">
    <property type="entry name" value="Flavi_E_Stem/Anchor_dom_sf"/>
</dbReference>
<dbReference type="InterPro" id="IPR011998">
    <property type="entry name" value="Flavi_Glycoprot_E_cen/dimer"/>
</dbReference>
<dbReference type="InterPro" id="IPR001157">
    <property type="entry name" value="Flavi_NS1"/>
</dbReference>
<dbReference type="InterPro" id="IPR000752">
    <property type="entry name" value="Flavi_NS2A"/>
</dbReference>
<dbReference type="InterPro" id="IPR000487">
    <property type="entry name" value="Flavi_NS2B"/>
</dbReference>
<dbReference type="InterPro" id="IPR001850">
    <property type="entry name" value="Flavi_NS3_S7"/>
</dbReference>
<dbReference type="InterPro" id="IPR000404">
    <property type="entry name" value="Flavi_NS4A"/>
</dbReference>
<dbReference type="InterPro" id="IPR001528">
    <property type="entry name" value="Flavi_NS4B"/>
</dbReference>
<dbReference type="InterPro" id="IPR046811">
    <property type="entry name" value="Flavi_NS5_thumb"/>
</dbReference>
<dbReference type="InterPro" id="IPR002535">
    <property type="entry name" value="Flavi_propep"/>
</dbReference>
<dbReference type="InterPro" id="IPR038688">
    <property type="entry name" value="Flavi_propep_sf"/>
</dbReference>
<dbReference type="InterPro" id="IPR047530">
    <property type="entry name" value="Flavi_RdRp"/>
</dbReference>
<dbReference type="InterPro" id="IPR000208">
    <property type="entry name" value="Flavi_RdRp_fingers/palm"/>
</dbReference>
<dbReference type="InterPro" id="IPR000336">
    <property type="entry name" value="Flavivir/Alphavir_Ig-like_sf"/>
</dbReference>
<dbReference type="InterPro" id="IPR014412">
    <property type="entry name" value="Gen_Poly_FLV"/>
</dbReference>
<dbReference type="InterPro" id="IPR036253">
    <property type="entry name" value="Glycoprot_cen/dimer_sf"/>
</dbReference>
<dbReference type="InterPro" id="IPR038055">
    <property type="entry name" value="Glycoprot_E_dimer_dom"/>
</dbReference>
<dbReference type="InterPro" id="IPR013756">
    <property type="entry name" value="GlyE_cen_dom_subdom2"/>
</dbReference>
<dbReference type="InterPro" id="IPR014001">
    <property type="entry name" value="Helicase_ATP-bd"/>
</dbReference>
<dbReference type="InterPro" id="IPR001650">
    <property type="entry name" value="Helicase_C-like"/>
</dbReference>
<dbReference type="InterPro" id="IPR014756">
    <property type="entry name" value="Ig_E-set"/>
</dbReference>
<dbReference type="InterPro" id="IPR026490">
    <property type="entry name" value="mRNA_cap_0/1_MeTrfase"/>
</dbReference>
<dbReference type="InterPro" id="IPR049486">
    <property type="entry name" value="NS3-hel_C_flaviviridae"/>
</dbReference>
<dbReference type="InterPro" id="IPR027417">
    <property type="entry name" value="P-loop_NTPase"/>
</dbReference>
<dbReference type="InterPro" id="IPR009003">
    <property type="entry name" value="Peptidase_S1_PA"/>
</dbReference>
<dbReference type="InterPro" id="IPR007094">
    <property type="entry name" value="RNA-dir_pol_PSvirus"/>
</dbReference>
<dbReference type="InterPro" id="IPR002877">
    <property type="entry name" value="RNA_MeTrfase_FtsJ_dom"/>
</dbReference>
<dbReference type="InterPro" id="IPR029063">
    <property type="entry name" value="SAM-dependent_MTases_sf"/>
</dbReference>
<dbReference type="NCBIfam" id="TIGR04240">
    <property type="entry name" value="flavi_E_stem"/>
    <property type="match status" value="1"/>
</dbReference>
<dbReference type="Pfam" id="PF20907">
    <property type="entry name" value="Flav_NS3-hel_C"/>
    <property type="match status" value="1"/>
</dbReference>
<dbReference type="Pfam" id="PF01003">
    <property type="entry name" value="Flavi_capsid"/>
    <property type="match status" value="1"/>
</dbReference>
<dbReference type="Pfam" id="PF07652">
    <property type="entry name" value="Flavi_DEAD"/>
    <property type="match status" value="1"/>
</dbReference>
<dbReference type="Pfam" id="PF21659">
    <property type="entry name" value="Flavi_E_stem"/>
    <property type="match status" value="1"/>
</dbReference>
<dbReference type="Pfam" id="PF02832">
    <property type="entry name" value="Flavi_glycop_C"/>
    <property type="match status" value="1"/>
</dbReference>
<dbReference type="Pfam" id="PF00869">
    <property type="entry name" value="Flavi_glycoprot"/>
    <property type="match status" value="1"/>
</dbReference>
<dbReference type="Pfam" id="PF01004">
    <property type="entry name" value="Flavi_M"/>
    <property type="match status" value="1"/>
</dbReference>
<dbReference type="Pfam" id="PF00948">
    <property type="entry name" value="Flavi_NS1"/>
    <property type="match status" value="1"/>
</dbReference>
<dbReference type="Pfam" id="PF01005">
    <property type="entry name" value="Flavi_NS2A"/>
    <property type="match status" value="1"/>
</dbReference>
<dbReference type="Pfam" id="PF01002">
    <property type="entry name" value="Flavi_NS2B"/>
    <property type="match status" value="1"/>
</dbReference>
<dbReference type="Pfam" id="PF01350">
    <property type="entry name" value="Flavi_NS4A"/>
    <property type="match status" value="1"/>
</dbReference>
<dbReference type="Pfam" id="PF01349">
    <property type="entry name" value="Flavi_NS4B"/>
    <property type="match status" value="1"/>
</dbReference>
<dbReference type="Pfam" id="PF00972">
    <property type="entry name" value="Flavi_NS5"/>
    <property type="match status" value="1"/>
</dbReference>
<dbReference type="Pfam" id="PF20483">
    <property type="entry name" value="Flavi_NS5_thumb"/>
    <property type="match status" value="1"/>
</dbReference>
<dbReference type="Pfam" id="PF01570">
    <property type="entry name" value="Flavi_propep"/>
    <property type="match status" value="1"/>
</dbReference>
<dbReference type="Pfam" id="PF01728">
    <property type="entry name" value="FtsJ"/>
    <property type="match status" value="1"/>
</dbReference>
<dbReference type="Pfam" id="PF00949">
    <property type="entry name" value="Peptidase_S7"/>
    <property type="match status" value="1"/>
</dbReference>
<dbReference type="PIRSF" id="PIRSF003817">
    <property type="entry name" value="Gen_Poly_FLV"/>
    <property type="match status" value="1"/>
</dbReference>
<dbReference type="SMART" id="SM00487">
    <property type="entry name" value="DEXDc"/>
    <property type="match status" value="1"/>
</dbReference>
<dbReference type="SMART" id="SM00490">
    <property type="entry name" value="HELICc"/>
    <property type="match status" value="1"/>
</dbReference>
<dbReference type="SUPFAM" id="SSF56672">
    <property type="entry name" value="DNA/RNA polymerases"/>
    <property type="match status" value="1"/>
</dbReference>
<dbReference type="SUPFAM" id="SSF81296">
    <property type="entry name" value="E set domains"/>
    <property type="match status" value="1"/>
</dbReference>
<dbReference type="SUPFAM" id="SSF101257">
    <property type="entry name" value="Flavivirus capsid protein C"/>
    <property type="match status" value="1"/>
</dbReference>
<dbReference type="SUPFAM" id="SSF52540">
    <property type="entry name" value="P-loop containing nucleoside triphosphate hydrolases"/>
    <property type="match status" value="2"/>
</dbReference>
<dbReference type="SUPFAM" id="SSF53335">
    <property type="entry name" value="S-adenosyl-L-methionine-dependent methyltransferases"/>
    <property type="match status" value="1"/>
</dbReference>
<dbReference type="SUPFAM" id="SSF50494">
    <property type="entry name" value="Trypsin-like serine proteases"/>
    <property type="match status" value="1"/>
</dbReference>
<dbReference type="SUPFAM" id="SSF56983">
    <property type="entry name" value="Viral glycoprotein, central and dimerisation domains"/>
    <property type="match status" value="1"/>
</dbReference>
<dbReference type="PROSITE" id="PS51527">
    <property type="entry name" value="FLAVIVIRUS_NS2B"/>
    <property type="match status" value="1"/>
</dbReference>
<dbReference type="PROSITE" id="PS51528">
    <property type="entry name" value="FLAVIVIRUS_NS3PRO"/>
    <property type="match status" value="1"/>
</dbReference>
<dbReference type="PROSITE" id="PS51192">
    <property type="entry name" value="HELICASE_ATP_BIND_1"/>
    <property type="match status" value="1"/>
</dbReference>
<dbReference type="PROSITE" id="PS51194">
    <property type="entry name" value="HELICASE_CTER"/>
    <property type="match status" value="1"/>
</dbReference>
<dbReference type="PROSITE" id="PS50507">
    <property type="entry name" value="RDRP_SSRNA_POS"/>
    <property type="match status" value="1"/>
</dbReference>
<dbReference type="PROSITE" id="PS51591">
    <property type="entry name" value="RNA_CAP01_NS5_MT"/>
    <property type="match status" value="1"/>
</dbReference>
<feature type="chain" id="PRO_0000405163" description="Genome polyprotein">
    <location>
        <begin position="1"/>
        <end position="3434"/>
    </location>
</feature>
<feature type="chain" id="PRO_0000037782" description="Capsid protein C" evidence="3">
    <location>
        <begin position="1"/>
        <end position="105"/>
    </location>
</feature>
<feature type="propeptide" id="PRO_0000405164" description="ER anchor for the capsid protein C, removed in mature form by serine protease NS3">
    <location>
        <begin position="106"/>
        <end position="125"/>
    </location>
</feature>
<feature type="chain" id="PRO_0000405165" description="Protein prM" evidence="3">
    <location>
        <begin position="126"/>
        <end position="292"/>
    </location>
</feature>
<feature type="chain" id="PRO_0000037783" description="Peptide pr" evidence="3">
    <location>
        <begin position="126"/>
        <end position="217"/>
    </location>
</feature>
<feature type="chain" id="PRO_0000037784" description="Small envelope protein M" evidence="3">
    <location>
        <begin position="218"/>
        <end position="292"/>
    </location>
</feature>
<feature type="chain" id="PRO_0000037785" description="Envelope protein E" evidence="3">
    <location>
        <begin position="293"/>
        <end position="793"/>
    </location>
</feature>
<feature type="chain" id="PRO_0000037786" description="Non-structural protein 1" evidence="3">
    <location>
        <begin position="794"/>
        <end position="1145"/>
    </location>
</feature>
<feature type="chain" id="PRO_0000037787" description="Non-structural protein 2A" evidence="3">
    <location>
        <begin position="1146"/>
        <end position="1372"/>
    </location>
</feature>
<feature type="chain" id="PRO_0000037788" description="Serine protease subunit NS2B" evidence="3">
    <location>
        <begin position="1373"/>
        <end position="1503"/>
    </location>
</feature>
<feature type="chain" id="PRO_0000037789" description="Serine protease NS3" evidence="3">
    <location>
        <begin position="1504"/>
        <end position="2122"/>
    </location>
</feature>
<feature type="chain" id="PRO_0000037790" description="Non-structural protein 4A" evidence="3">
    <location>
        <begin position="2123"/>
        <end position="2248"/>
    </location>
</feature>
<feature type="peptide" id="PRO_0000405166" description="Peptide 2k" evidence="3">
    <location>
        <begin position="2249"/>
        <end position="2271"/>
    </location>
</feature>
<feature type="chain" id="PRO_0000037791" description="Non-structural protein 4B" evidence="3">
    <location>
        <begin position="2272"/>
        <end position="2529"/>
    </location>
</feature>
<feature type="chain" id="PRO_0000037792" description="RNA-directed RNA polymerase NS5" evidence="3">
    <location>
        <begin position="2530"/>
        <end position="3434"/>
    </location>
</feature>
<feature type="topological domain" description="Cytoplasmic" evidence="12">
    <location>
        <begin position="2"/>
        <end position="110"/>
    </location>
</feature>
<feature type="transmembrane region" description="Helical" evidence="12">
    <location>
        <begin position="111"/>
        <end position="131"/>
    </location>
</feature>
<feature type="topological domain" description="Extracellular" evidence="12">
    <location>
        <begin position="132"/>
        <end position="251"/>
    </location>
</feature>
<feature type="transmembrane region" description="Helical" evidence="12">
    <location>
        <begin position="252"/>
        <end position="272"/>
    </location>
</feature>
<feature type="topological domain" description="Cytoplasmic" evidence="12">
    <location>
        <begin position="273"/>
        <end position="277"/>
    </location>
</feature>
<feature type="transmembrane region" description="Helical" evidence="28">
    <location>
        <begin position="278"/>
        <end position="292"/>
    </location>
</feature>
<feature type="topological domain" description="Extracellular" evidence="12">
    <location>
        <begin position="293"/>
        <end position="745"/>
    </location>
</feature>
<feature type="transmembrane region" description="Helical" evidence="12">
    <location>
        <begin position="746"/>
        <end position="766"/>
    </location>
</feature>
<feature type="topological domain" description="Cytoplasmic" evidence="12">
    <location>
        <begin position="767"/>
        <end position="772"/>
    </location>
</feature>
<feature type="transmembrane region" description="Helical" evidence="12">
    <location>
        <begin position="773"/>
        <end position="793"/>
    </location>
</feature>
<feature type="topological domain" description="Extracellular" evidence="12">
    <location>
        <begin position="794"/>
        <end position="1218"/>
    </location>
</feature>
<feature type="transmembrane region" description="Helical" evidence="12">
    <location>
        <begin position="1219"/>
        <end position="1239"/>
    </location>
</feature>
<feature type="topological domain" description="Cytoplasmic" evidence="12">
    <location>
        <begin position="1240"/>
        <end position="1249"/>
    </location>
</feature>
<feature type="transmembrane region" description="Helical" evidence="12">
    <location>
        <begin position="1250"/>
        <end position="1270"/>
    </location>
</feature>
<feature type="topological domain" description="Lumenal" evidence="12">
    <location>
        <begin position="1271"/>
        <end position="1286"/>
    </location>
</feature>
<feature type="transmembrane region" description="Helical" evidence="12">
    <location>
        <begin position="1287"/>
        <end position="1307"/>
    </location>
</feature>
<feature type="topological domain" description="Cytoplasmic" evidence="12">
    <location>
        <position position="1308"/>
    </location>
</feature>
<feature type="transmembrane region" description="Helical" evidence="12">
    <location>
        <begin position="1309"/>
        <end position="1329"/>
    </location>
</feature>
<feature type="topological domain" description="Lumenal" evidence="12">
    <location>
        <begin position="1330"/>
        <end position="1340"/>
    </location>
</feature>
<feature type="transmembrane region" description="Helical" evidence="12">
    <location>
        <begin position="1341"/>
        <end position="1361"/>
    </location>
</feature>
<feature type="topological domain" description="Cytoplasmic" evidence="12">
    <location>
        <begin position="1362"/>
        <end position="1373"/>
    </location>
</feature>
<feature type="transmembrane region" description="Helical" evidence="12">
    <location>
        <begin position="1374"/>
        <end position="1394"/>
    </location>
</feature>
<feature type="topological domain" description="Lumenal" evidence="12">
    <location>
        <begin position="1395"/>
        <end position="1397"/>
    </location>
</feature>
<feature type="transmembrane region" description="Helical" evidence="12">
    <location>
        <begin position="1398"/>
        <end position="1418"/>
    </location>
</feature>
<feature type="topological domain" description="Cytoplasmic" evidence="12">
    <location>
        <begin position="1419"/>
        <end position="1475"/>
    </location>
</feature>
<feature type="intramembrane region" description="Helical" evidence="12">
    <location>
        <begin position="1476"/>
        <end position="1496"/>
    </location>
</feature>
<feature type="topological domain" description="Cytoplasmic" evidence="12">
    <location>
        <begin position="1497"/>
        <end position="2172"/>
    </location>
</feature>
<feature type="transmembrane region" description="Helical" evidence="12">
    <location>
        <begin position="2173"/>
        <end position="2193"/>
    </location>
</feature>
<feature type="topological domain" description="Lumenal" evidence="12">
    <location>
        <begin position="2194"/>
        <end position="2197"/>
    </location>
</feature>
<feature type="intramembrane region" description="Helical" evidence="12">
    <location>
        <begin position="2198"/>
        <end position="2218"/>
    </location>
</feature>
<feature type="topological domain" description="Lumenal" evidence="12">
    <location>
        <begin position="2219"/>
        <end position="2220"/>
    </location>
</feature>
<feature type="transmembrane region" description="Helical" evidence="12">
    <location>
        <begin position="2221"/>
        <end position="2241"/>
    </location>
</feature>
<feature type="topological domain" description="Cytoplasmic" evidence="12">
    <location>
        <begin position="2242"/>
        <end position="2256"/>
    </location>
</feature>
<feature type="transmembrane region" description="Helical; Note=Signal for NS4B" evidence="28">
    <location>
        <begin position="2257"/>
        <end position="2271"/>
    </location>
</feature>
<feature type="topological domain" description="Lumenal" evidence="12">
    <location>
        <begin position="2272"/>
        <end position="2309"/>
    </location>
</feature>
<feature type="intramembrane region" description="Helical" evidence="12">
    <location>
        <begin position="2310"/>
        <end position="2330"/>
    </location>
</feature>
<feature type="topological domain" description="Lumenal" evidence="12">
    <location>
        <begin position="2331"/>
        <end position="2366"/>
    </location>
</feature>
<feature type="transmembrane region" description="Helical" evidence="12">
    <location>
        <begin position="2367"/>
        <end position="2394"/>
    </location>
</feature>
<feature type="topological domain" description="Cytoplasmic" evidence="12">
    <location>
        <begin position="2395"/>
        <end position="2446"/>
    </location>
</feature>
<feature type="transmembrane region" description="Helical" evidence="12">
    <location>
        <begin position="2447"/>
        <end position="2467"/>
    </location>
</feature>
<feature type="topological domain" description="Lumenal" evidence="12">
    <location>
        <begin position="2468"/>
        <end position="2498"/>
    </location>
</feature>
<feature type="transmembrane region" description="Helical" evidence="12">
    <location>
        <begin position="2499"/>
        <end position="2519"/>
    </location>
</feature>
<feature type="topological domain" description="Cytoplasmic" evidence="12">
    <location>
        <begin position="2520"/>
        <end position="3434"/>
    </location>
</feature>
<feature type="domain" description="Peptidase S7" evidence="17">
    <location>
        <begin position="1504"/>
        <end position="1681"/>
    </location>
</feature>
<feature type="domain" description="Helicase ATP-binding" evidence="14">
    <location>
        <begin position="1684"/>
        <end position="1840"/>
    </location>
</feature>
<feature type="domain" description="Helicase C-terminal" evidence="15">
    <location>
        <begin position="1851"/>
        <end position="2016"/>
    </location>
</feature>
<feature type="domain" description="mRNA cap 0-1 NS5-type MT" evidence="18">
    <location>
        <begin position="2530"/>
        <end position="2795"/>
    </location>
</feature>
<feature type="domain" description="RdRp catalytic" evidence="13">
    <location>
        <begin position="3059"/>
        <end position="3211"/>
    </location>
</feature>
<feature type="region of interest" description="Interaction with host EXOC1" evidence="3">
    <location>
        <begin position="2"/>
        <end position="15"/>
    </location>
</feature>
<feature type="region of interest" description="Hydrophobic; homodimerization of capsid protein C" evidence="8">
    <location>
        <begin position="37"/>
        <end position="72"/>
    </location>
</feature>
<feature type="region of interest" description="Fusion peptide" evidence="5">
    <location>
        <begin position="390"/>
        <end position="403"/>
    </location>
</feature>
<feature type="region of interest" description="Interacts with and activates NS3 protease" evidence="16">
    <location>
        <begin position="1426"/>
        <end position="1465"/>
    </location>
</feature>
<feature type="region of interest" description="Important for RNA-binding" evidence="6">
    <location>
        <begin position="1688"/>
        <end position="1691"/>
    </location>
</feature>
<feature type="region of interest" description="Disordered" evidence="19">
    <location>
        <begin position="1958"/>
        <end position="1979"/>
    </location>
</feature>
<feature type="region of interest" description="Regulates the ATPase activity of NS3 helicase" evidence="11">
    <location>
        <begin position="2167"/>
        <end position="2171"/>
    </location>
</feature>
<feature type="short sequence motif" description="DEAH box" evidence="14">
    <location>
        <begin position="1788"/>
        <end position="1791"/>
    </location>
</feature>
<feature type="active site" description="Charge relay system; for serine protease NS3 activity" evidence="17">
    <location>
        <position position="1554"/>
    </location>
</feature>
<feature type="active site" description="Charge relay system; for serine protease NS3 activity" evidence="17">
    <location>
        <position position="1578"/>
    </location>
</feature>
<feature type="active site" description="Charge relay system; for serine protease NS3 activity" evidence="17">
    <location>
        <position position="1638"/>
    </location>
</feature>
<feature type="active site" description="For 2'-O-MTase activity" evidence="10">
    <location>
        <position position="2590"/>
    </location>
</feature>
<feature type="active site" description="For 2'-O-MTase activity" evidence="10">
    <location>
        <position position="2675"/>
    </location>
</feature>
<feature type="active site" description="For 2'-O-MTase activity" evidence="10">
    <location>
        <position position="2711"/>
    </location>
</feature>
<feature type="active site" description="For 2'-O-MTase activity" evidence="10">
    <location>
        <position position="2747"/>
    </location>
</feature>
<feature type="binding site" evidence="14">
    <location>
        <begin position="1697"/>
        <end position="1704"/>
    </location>
    <ligand>
        <name>ATP</name>
        <dbReference type="ChEBI" id="CHEBI:30616"/>
    </ligand>
</feature>
<feature type="binding site" evidence="18">
    <location>
        <position position="2585"/>
    </location>
    <ligand>
        <name>S-adenosyl-L-methionine</name>
        <dbReference type="ChEBI" id="CHEBI:59789"/>
    </ligand>
</feature>
<feature type="binding site" evidence="18">
    <location>
        <position position="2615"/>
    </location>
    <ligand>
        <name>S-adenosyl-L-methionine</name>
        <dbReference type="ChEBI" id="CHEBI:59789"/>
    </ligand>
</feature>
<feature type="binding site" evidence="18">
    <location>
        <position position="2616"/>
    </location>
    <ligand>
        <name>S-adenosyl-L-methionine</name>
        <dbReference type="ChEBI" id="CHEBI:59789"/>
    </ligand>
</feature>
<feature type="binding site" evidence="18">
    <location>
        <position position="2633"/>
    </location>
    <ligand>
        <name>S-adenosyl-L-methionine</name>
        <dbReference type="ChEBI" id="CHEBI:59789"/>
    </ligand>
</feature>
<feature type="binding site" evidence="18">
    <location>
        <position position="2634"/>
    </location>
    <ligand>
        <name>S-adenosyl-L-methionine</name>
        <dbReference type="ChEBI" id="CHEBI:59789"/>
    </ligand>
</feature>
<feature type="binding site" evidence="18">
    <location>
        <position position="2660"/>
    </location>
    <ligand>
        <name>S-adenosyl-L-methionine</name>
        <dbReference type="ChEBI" id="CHEBI:59789"/>
    </ligand>
</feature>
<feature type="binding site" evidence="18">
    <location>
        <position position="2661"/>
    </location>
    <ligand>
        <name>S-adenosyl-L-methionine</name>
        <dbReference type="ChEBI" id="CHEBI:59789"/>
    </ligand>
</feature>
<feature type="binding site" evidence="18">
    <location>
        <position position="2676"/>
    </location>
    <ligand>
        <name>S-adenosyl-L-methionine</name>
        <dbReference type="ChEBI" id="CHEBI:59789"/>
    </ligand>
</feature>
<feature type="binding site" evidence="18">
    <location>
        <position position="2749"/>
    </location>
    <ligand>
        <name>S-adenosyl-L-methionine</name>
        <dbReference type="ChEBI" id="CHEBI:59789"/>
    </ligand>
</feature>
<feature type="binding site" evidence="4">
    <location>
        <position position="2969"/>
    </location>
    <ligand>
        <name>Zn(2+)</name>
        <dbReference type="ChEBI" id="CHEBI:29105"/>
        <label>1</label>
    </ligand>
</feature>
<feature type="binding site" evidence="4">
    <location>
        <position position="2973"/>
    </location>
    <ligand>
        <name>Zn(2+)</name>
        <dbReference type="ChEBI" id="CHEBI:29105"/>
        <label>1</label>
    </ligand>
</feature>
<feature type="binding site" evidence="4">
    <location>
        <position position="2978"/>
    </location>
    <ligand>
        <name>Zn(2+)</name>
        <dbReference type="ChEBI" id="CHEBI:29105"/>
        <label>1</label>
    </ligand>
</feature>
<feature type="binding site" evidence="4">
    <location>
        <position position="2981"/>
    </location>
    <ligand>
        <name>Zn(2+)</name>
        <dbReference type="ChEBI" id="CHEBI:29105"/>
        <label>1</label>
    </ligand>
</feature>
<feature type="binding site" evidence="4">
    <location>
        <position position="3246"/>
    </location>
    <ligand>
        <name>Zn(2+)</name>
        <dbReference type="ChEBI" id="CHEBI:29105"/>
        <label>2</label>
    </ligand>
</feature>
<feature type="binding site" evidence="4">
    <location>
        <position position="3262"/>
    </location>
    <ligand>
        <name>Zn(2+)</name>
        <dbReference type="ChEBI" id="CHEBI:29105"/>
        <label>2</label>
    </ligand>
</feature>
<feature type="binding site" evidence="4">
    <location>
        <position position="3381"/>
    </location>
    <ligand>
        <name>Zn(2+)</name>
        <dbReference type="ChEBI" id="CHEBI:29105"/>
        <label>2</label>
    </ligand>
</feature>
<feature type="site" description="Cleavage; by viral protease NS3" evidence="12">
    <location>
        <begin position="105"/>
        <end position="106"/>
    </location>
</feature>
<feature type="site" description="Cleavage; by host signal peptidase" evidence="22">
    <location>
        <begin position="125"/>
        <end position="126"/>
    </location>
</feature>
<feature type="site" description="Cleavage; by host furin" evidence="1">
    <location>
        <begin position="217"/>
        <end position="218"/>
    </location>
</feature>
<feature type="site" description="Cleavage; by host signal peptidase" evidence="12">
    <location>
        <begin position="292"/>
        <end position="293"/>
    </location>
</feature>
<feature type="site" description="Cleavage; by host signal peptidase" evidence="12">
    <location>
        <begin position="793"/>
        <end position="794"/>
    </location>
</feature>
<feature type="site" description="Cleavage; by host" evidence="24">
    <location>
        <begin position="1145"/>
        <end position="1146"/>
    </location>
</feature>
<feature type="site" description="Cleavage; by viral protease NS3" evidence="12">
    <location>
        <begin position="1372"/>
        <end position="1373"/>
    </location>
</feature>
<feature type="site" description="Cleavage; by autolysis" evidence="12">
    <location>
        <begin position="1503"/>
        <end position="1504"/>
    </location>
</feature>
<feature type="site" description="Involved in NS3 ATPase and RTPase activities" evidence="4">
    <location>
        <position position="1961"/>
    </location>
</feature>
<feature type="site" description="Involved in NS3 ATPase and RTPase activities" evidence="4">
    <location>
        <position position="1964"/>
    </location>
</feature>
<feature type="site" description="Cleavage; by autolysis" evidence="12">
    <location>
        <begin position="2122"/>
        <end position="2123"/>
    </location>
</feature>
<feature type="site" description="Cleavage; by viral protease NS3" evidence="12">
    <location>
        <begin position="2248"/>
        <end position="2249"/>
    </location>
</feature>
<feature type="site" description="Cleavage; by host signal peptidase" evidence="12">
    <location>
        <begin position="2271"/>
        <end position="2272"/>
    </location>
</feature>
<feature type="site" description="Cleavage; by viral protease NS3" evidence="12">
    <location>
        <begin position="2529"/>
        <end position="2530"/>
    </location>
</feature>
<feature type="site" description="mRNA cap binding" evidence="18">
    <location>
        <position position="2542"/>
    </location>
</feature>
<feature type="site" description="mRNA cap binding; via carbonyl oxygen" evidence="18">
    <location>
        <position position="2545"/>
    </location>
</feature>
<feature type="site" description="mRNA cap binding" evidence="18">
    <location>
        <position position="2546"/>
    </location>
</feature>
<feature type="site" description="mRNA cap binding; via carbonyl oxygen" evidence="18">
    <location>
        <position position="2548"/>
    </location>
</feature>
<feature type="site" description="mRNA cap binding" evidence="18">
    <location>
        <position position="2553"/>
    </location>
</feature>
<feature type="site" description="mRNA cap binding" evidence="18">
    <location>
        <position position="2557"/>
    </location>
</feature>
<feature type="site" description="Essential for 2'-O-methyltransferase activity" evidence="18">
    <location>
        <position position="2590"/>
    </location>
</feature>
<feature type="site" description="Essential for 2'-O-methyltransferase and N-7 methyltransferase activity" evidence="18">
    <location>
        <position position="2675"/>
    </location>
</feature>
<feature type="site" description="mRNA cap binding" evidence="18">
    <location>
        <position position="2679"/>
    </location>
</feature>
<feature type="site" description="Essential for 2'-O-methyltransferase activity" evidence="18">
    <location>
        <position position="2711"/>
    </location>
</feature>
<feature type="site" description="mRNA cap binding" evidence="18">
    <location>
        <position position="2742"/>
    </location>
</feature>
<feature type="site" description="mRNA cap binding" evidence="18">
    <location>
        <position position="2744"/>
    </location>
</feature>
<feature type="site" description="Essential for 2'-O-methyltransferase activity" evidence="18">
    <location>
        <position position="2747"/>
    </location>
</feature>
<feature type="modified residue" description="N6-acetyllysine; by host" evidence="9">
    <location>
        <position position="1892"/>
    </location>
</feature>
<feature type="modified residue" description="Phosphoserine" evidence="2">
    <location>
        <position position="2585"/>
    </location>
</feature>
<feature type="glycosylation site" description="N-linked (GlcNAc...) asparagine; by host" evidence="4">
    <location>
        <position position="140"/>
    </location>
</feature>
<feature type="glycosylation site" description="N-linked (GlcNAc...) asparagine; by host" evidence="12">
    <location>
        <position position="446"/>
    </location>
</feature>
<feature type="glycosylation site" description="N-linked (GlcNAc...) asparagine; by host" evidence="20">
    <location>
        <position position="923"/>
    </location>
</feature>
<feature type="glycosylation site" description="N-linked (GlcNAc...) asparagine; by host" evidence="20">
    <location>
        <position position="968"/>
    </location>
</feature>
<feature type="glycosylation site" description="N-linked (GlcNAc...) (high mannose) asparagine; by host" evidence="20">
    <location>
        <position position="1000"/>
    </location>
</feature>
<feature type="disulfide bond" evidence="11">
    <location>
        <begin position="295"/>
        <end position="322"/>
    </location>
</feature>
<feature type="disulfide bond" evidence="11">
    <location>
        <begin position="352"/>
        <end position="413"/>
    </location>
</feature>
<feature type="disulfide bond" evidence="3">
    <location>
        <begin position="352"/>
        <end position="408"/>
    </location>
</feature>
<feature type="disulfide bond" evidence="11">
    <location>
        <begin position="366"/>
        <end position="397"/>
    </location>
</feature>
<feature type="disulfide bond" evidence="3">
    <location>
        <begin position="384"/>
        <end position="413"/>
    </location>
</feature>
<feature type="disulfide bond" evidence="11">
    <location>
        <begin position="384"/>
        <end position="408"/>
    </location>
</feature>
<feature type="disulfide bond" evidence="11">
    <location>
        <begin position="482"/>
        <end position="580"/>
    </location>
</feature>
<feature type="disulfide bond" evidence="11">
    <location>
        <begin position="597"/>
        <end position="628"/>
    </location>
</feature>
<feature type="disulfide bond" evidence="20">
    <location>
        <begin position="797"/>
        <end position="808"/>
    </location>
</feature>
<feature type="disulfide bond" evidence="20">
    <location>
        <begin position="848"/>
        <end position="936"/>
    </location>
</feature>
<feature type="disulfide bond" evidence="20">
    <location>
        <begin position="972"/>
        <end position="1016"/>
    </location>
</feature>
<feature type="disulfide bond" evidence="11">
    <location>
        <begin position="1073"/>
        <end position="1122"/>
    </location>
</feature>
<feature type="disulfide bond" evidence="11">
    <location>
        <begin position="1084"/>
        <end position="1105"/>
    </location>
</feature>
<feature type="disulfide bond" evidence="11">
    <location>
        <begin position="1106"/>
        <end position="1109"/>
    </location>
</feature>
<feature type="mutagenesis site" description="Increased cleavage of prM." evidence="27">
    <original>GFAA</original>
    <variation>PQAQ</variation>
    <location>
        <begin position="121"/>
        <end position="124"/>
    </location>
</feature>
<feature type="sequence conflict" description="In Ref. 2; CAA27184." evidence="28" ref="2">
    <original>L</original>
    <variation>V</variation>
    <location>
        <position position="115"/>
    </location>
</feature>
<feature type="sequence conflict" description="In Ref. 2; CAA27184." evidence="28" ref="2">
    <original>P</original>
    <variation>Q</variation>
    <location>
        <position position="754"/>
    </location>
</feature>
<feature type="sequence conflict" description="In Ref. 2; CAA27184." evidence="28" ref="2">
    <original>G</original>
    <variation>V</variation>
    <location>
        <position position="960"/>
    </location>
</feature>
<feature type="sequence conflict" description="In Ref. 2; CAA27184." evidence="28" ref="2">
    <original>R</original>
    <variation>W</variation>
    <location>
        <position position="1485"/>
    </location>
</feature>
<feature type="sequence conflict" description="In Ref. 2; CAA27184." evidence="28" ref="2">
    <original>V</original>
    <variation>G</variation>
    <location>
        <position position="1779"/>
    </location>
</feature>
<feature type="strand" evidence="34">
    <location>
        <begin position="1423"/>
        <end position="1430"/>
    </location>
</feature>
<feature type="strand" evidence="34">
    <location>
        <begin position="1436"/>
        <end position="1440"/>
    </location>
</feature>
<feature type="strand" evidence="34">
    <location>
        <begin position="1523"/>
        <end position="1531"/>
    </location>
</feature>
<feature type="strand" evidence="34">
    <location>
        <begin position="1536"/>
        <end position="1545"/>
    </location>
</feature>
<feature type="strand" evidence="34">
    <location>
        <begin position="1548"/>
        <end position="1551"/>
    </location>
</feature>
<feature type="helix" evidence="34">
    <location>
        <begin position="1553"/>
        <end position="1556"/>
    </location>
</feature>
<feature type="strand" evidence="34">
    <location>
        <begin position="1564"/>
        <end position="1568"/>
    </location>
</feature>
<feature type="strand" evidence="34">
    <location>
        <begin position="1570"/>
        <end position="1574"/>
    </location>
</feature>
<feature type="turn" evidence="34">
    <location>
        <begin position="1575"/>
        <end position="1578"/>
    </location>
</feature>
<feature type="strand" evidence="34">
    <location>
        <begin position="1579"/>
        <end position="1585"/>
    </location>
</feature>
<feature type="strand" evidence="34">
    <location>
        <begin position="1598"/>
        <end position="1602"/>
    </location>
</feature>
<feature type="strand" evidence="34">
    <location>
        <begin position="1610"/>
        <end position="1614"/>
    </location>
</feature>
<feature type="strand" evidence="34">
    <location>
        <begin position="1617"/>
        <end position="1619"/>
    </location>
</feature>
<feature type="strand" evidence="34">
    <location>
        <begin position="1622"/>
        <end position="1624"/>
    </location>
</feature>
<feature type="strand" evidence="34">
    <location>
        <begin position="1626"/>
        <end position="1629"/>
    </location>
</feature>
<feature type="helix" evidence="34">
    <location>
        <begin position="1635"/>
        <end position="1637"/>
    </location>
</feature>
<feature type="strand" evidence="34">
    <location>
        <begin position="1641"/>
        <end position="1643"/>
    </location>
</feature>
<feature type="strand" evidence="34">
    <location>
        <begin position="1649"/>
        <end position="1658"/>
    </location>
</feature>
<feature type="strand" evidence="34">
    <location>
        <begin position="1660"/>
        <end position="1662"/>
    </location>
</feature>
<feature type="strand" evidence="34">
    <location>
        <begin position="1664"/>
        <end position="1669"/>
    </location>
</feature>
<feature type="helix" evidence="33">
    <location>
        <begin position="1684"/>
        <end position="1687"/>
    </location>
</feature>
<feature type="strand" evidence="33">
    <location>
        <begin position="1692"/>
        <end position="1695"/>
    </location>
</feature>
<feature type="strand" evidence="33">
    <location>
        <begin position="1699"/>
        <end position="1701"/>
    </location>
</feature>
<feature type="turn" evidence="33">
    <location>
        <begin position="1703"/>
        <end position="1706"/>
    </location>
</feature>
<feature type="helix" evidence="33">
    <location>
        <begin position="1707"/>
        <end position="1717"/>
    </location>
</feature>
<feature type="strand" evidence="33">
    <location>
        <begin position="1722"/>
        <end position="1728"/>
    </location>
</feature>
<feature type="helix" evidence="33">
    <location>
        <begin position="1729"/>
        <end position="1738"/>
    </location>
</feature>
<feature type="turn" evidence="33">
    <location>
        <begin position="1739"/>
        <end position="1741"/>
    </location>
</feature>
<feature type="strand" evidence="33">
    <location>
        <begin position="1744"/>
        <end position="1746"/>
    </location>
</feature>
<feature type="strand" evidence="33">
    <location>
        <begin position="1761"/>
        <end position="1765"/>
    </location>
</feature>
<feature type="helix" evidence="33">
    <location>
        <begin position="1766"/>
        <end position="1773"/>
    </location>
</feature>
<feature type="strand" evidence="33">
    <location>
        <begin position="1775"/>
        <end position="1777"/>
    </location>
</feature>
<feature type="strand" evidence="33">
    <location>
        <begin position="1783"/>
        <end position="1789"/>
    </location>
</feature>
<feature type="helix" evidence="33">
    <location>
        <begin position="1795"/>
        <end position="1809"/>
    </location>
</feature>
<feature type="strand" evidence="33">
    <location>
        <begin position="1814"/>
        <end position="1818"/>
    </location>
</feature>
<feature type="strand" evidence="33">
    <location>
        <begin position="1836"/>
        <end position="1840"/>
    </location>
</feature>
<feature type="strand" evidence="33">
    <location>
        <begin position="1849"/>
        <end position="1851"/>
    </location>
</feature>
<feature type="helix" evidence="33">
    <location>
        <begin position="1853"/>
        <end position="1857"/>
    </location>
</feature>
<feature type="strand" evidence="33">
    <location>
        <begin position="1862"/>
        <end position="1865"/>
    </location>
</feature>
<feature type="helix" evidence="33">
    <location>
        <begin position="1869"/>
        <end position="1881"/>
    </location>
</feature>
<feature type="strand" evidence="33">
    <location>
        <begin position="1886"/>
        <end position="1889"/>
    </location>
</feature>
<feature type="turn" evidence="33">
    <location>
        <begin position="1891"/>
        <end position="1893"/>
    </location>
</feature>
<feature type="helix" evidence="33">
    <location>
        <begin position="1894"/>
        <end position="1901"/>
    </location>
</feature>
<feature type="strand" evidence="33">
    <location>
        <begin position="1907"/>
        <end position="1911"/>
    </location>
</feature>
<feature type="helix" evidence="33">
    <location>
        <begin position="1913"/>
        <end position="1916"/>
    </location>
</feature>
<feature type="strand" evidence="33">
    <location>
        <begin position="1924"/>
        <end position="1928"/>
    </location>
</feature>
<feature type="strand" evidence="33">
    <location>
        <begin position="1935"/>
        <end position="1938"/>
    </location>
</feature>
<feature type="strand" evidence="33">
    <location>
        <begin position="1944"/>
        <end position="1947"/>
    </location>
</feature>
<feature type="strand" evidence="34">
    <location>
        <begin position="1950"/>
        <end position="1952"/>
    </location>
</feature>
<feature type="helix" evidence="33">
    <location>
        <begin position="1955"/>
        <end position="1962"/>
    </location>
</feature>
<feature type="strand" evidence="33">
    <location>
        <begin position="1974"/>
        <end position="1978"/>
    </location>
</feature>
<feature type="helix" evidence="33">
    <location>
        <begin position="1990"/>
        <end position="1999"/>
    </location>
</feature>
<feature type="turn" evidence="34">
    <location>
        <begin position="2005"/>
        <end position="2007"/>
    </location>
</feature>
<feature type="helix" evidence="33">
    <location>
        <begin position="2014"/>
        <end position="2016"/>
    </location>
</feature>
<feature type="turn" evidence="33">
    <location>
        <begin position="2024"/>
        <end position="2027"/>
    </location>
</feature>
<feature type="helix" evidence="33">
    <location>
        <begin position="2031"/>
        <end position="2042"/>
    </location>
</feature>
<feature type="helix" evidence="33">
    <location>
        <begin position="2048"/>
        <end position="2055"/>
    </location>
</feature>
<feature type="turn" evidence="33">
    <location>
        <begin position="2056"/>
        <end position="2058"/>
    </location>
</feature>
<feature type="helix" evidence="33">
    <location>
        <begin position="2064"/>
        <end position="2067"/>
    </location>
</feature>
<feature type="helix" evidence="33">
    <location>
        <begin position="2072"/>
        <end position="2074"/>
    </location>
</feature>
<feature type="strand" evidence="33">
    <location>
        <begin position="2078"/>
        <end position="2081"/>
    </location>
</feature>
<feature type="strand" evidence="33">
    <location>
        <begin position="2098"/>
        <end position="2101"/>
    </location>
</feature>
<feature type="helix" evidence="33">
    <location>
        <begin position="2102"/>
        <end position="2104"/>
    </location>
</feature>
<feature type="helix" evidence="33">
    <location>
        <begin position="2108"/>
        <end position="2118"/>
    </location>
</feature>
<feature type="helix" evidence="29">
    <location>
        <begin position="2537"/>
        <end position="2546"/>
    </location>
</feature>
<feature type="helix" evidence="29">
    <location>
        <begin position="2550"/>
        <end position="2557"/>
    </location>
</feature>
<feature type="turn" evidence="29">
    <location>
        <begin position="2558"/>
        <end position="2560"/>
    </location>
</feature>
<feature type="strand" evidence="29">
    <location>
        <begin position="2562"/>
        <end position="2564"/>
    </location>
</feature>
<feature type="helix" evidence="29">
    <location>
        <begin position="2566"/>
        <end position="2568"/>
    </location>
</feature>
<feature type="turn" evidence="32">
    <location>
        <begin position="2571"/>
        <end position="2576"/>
    </location>
</feature>
<feature type="strand" evidence="31">
    <location>
        <begin position="2578"/>
        <end position="2580"/>
    </location>
</feature>
<feature type="strand" evidence="32">
    <location>
        <begin position="2584"/>
        <end position="2586"/>
    </location>
</feature>
<feature type="helix" evidence="29">
    <location>
        <begin position="2587"/>
        <end position="2596"/>
    </location>
</feature>
<feature type="strand" evidence="29">
    <location>
        <begin position="2604"/>
        <end position="2609"/>
    </location>
</feature>
<feature type="helix" evidence="29">
    <location>
        <begin position="2615"/>
        <end position="2620"/>
    </location>
</feature>
<feature type="strand" evidence="29">
    <location>
        <begin position="2626"/>
        <end position="2632"/>
    </location>
</feature>
<feature type="helix" evidence="29">
    <location>
        <begin position="2650"/>
        <end position="2652"/>
    </location>
</feature>
<feature type="strand" evidence="29">
    <location>
        <begin position="2653"/>
        <end position="2656"/>
    </location>
</feature>
<feature type="helix" evidence="29">
    <location>
        <begin position="2661"/>
        <end position="2663"/>
    </location>
</feature>
<feature type="strand" evidence="29">
    <location>
        <begin position="2670"/>
        <end position="2674"/>
    </location>
</feature>
<feature type="helix" evidence="29">
    <location>
        <begin position="2683"/>
        <end position="2701"/>
    </location>
</feature>
<feature type="strand" evidence="29">
    <location>
        <begin position="2706"/>
        <end position="2713"/>
    </location>
</feature>
<feature type="helix" evidence="29">
    <location>
        <begin position="2718"/>
        <end position="2731"/>
    </location>
</feature>
<feature type="strand" evidence="29">
    <location>
        <begin position="2734"/>
        <end position="2736"/>
    </location>
</feature>
<feature type="strand" evidence="29">
    <location>
        <begin position="2748"/>
        <end position="2751"/>
    </location>
</feature>
<feature type="helix" evidence="29">
    <location>
        <begin position="2758"/>
        <end position="2771"/>
    </location>
</feature>
<feature type="turn" evidence="30">
    <location>
        <begin position="2772"/>
        <end position="2774"/>
    </location>
</feature>
<feature type="strand" evidence="29">
    <location>
        <begin position="2782"/>
        <end position="2784"/>
    </location>
</feature>
<evidence type="ECO:0000250" key="1"/>
<evidence type="ECO:0000250" key="2">
    <source>
        <dbReference type="UniProtKB" id="P03314"/>
    </source>
</evidence>
<evidence type="ECO:0000250" key="3">
    <source>
        <dbReference type="UniProtKB" id="P06935"/>
    </source>
</evidence>
<evidence type="ECO:0000250" key="4">
    <source>
        <dbReference type="UniProtKB" id="P14335"/>
    </source>
</evidence>
<evidence type="ECO:0000250" key="5">
    <source>
        <dbReference type="UniProtKB" id="P14336"/>
    </source>
</evidence>
<evidence type="ECO:0000250" key="6">
    <source>
        <dbReference type="UniProtKB" id="P14340"/>
    </source>
</evidence>
<evidence type="ECO:0000250" key="7">
    <source>
        <dbReference type="UniProtKB" id="P17763"/>
    </source>
</evidence>
<evidence type="ECO:0000250" key="8">
    <source>
        <dbReference type="UniProtKB" id="P29990"/>
    </source>
</evidence>
<evidence type="ECO:0000250" key="9">
    <source>
        <dbReference type="UniProtKB" id="Q32ZE1"/>
    </source>
</evidence>
<evidence type="ECO:0000250" key="10">
    <source>
        <dbReference type="UniProtKB" id="Q6YMS4"/>
    </source>
</evidence>
<evidence type="ECO:0000250" key="11">
    <source>
        <dbReference type="UniProtKB" id="Q9Q6P4"/>
    </source>
</evidence>
<evidence type="ECO:0000255" key="12"/>
<evidence type="ECO:0000255" key="13">
    <source>
        <dbReference type="PROSITE-ProRule" id="PRU00539"/>
    </source>
</evidence>
<evidence type="ECO:0000255" key="14">
    <source>
        <dbReference type="PROSITE-ProRule" id="PRU00541"/>
    </source>
</evidence>
<evidence type="ECO:0000255" key="15">
    <source>
        <dbReference type="PROSITE-ProRule" id="PRU00542"/>
    </source>
</evidence>
<evidence type="ECO:0000255" key="16">
    <source>
        <dbReference type="PROSITE-ProRule" id="PRU00859"/>
    </source>
</evidence>
<evidence type="ECO:0000255" key="17">
    <source>
        <dbReference type="PROSITE-ProRule" id="PRU00860"/>
    </source>
</evidence>
<evidence type="ECO:0000255" key="18">
    <source>
        <dbReference type="PROSITE-ProRule" id="PRU00924"/>
    </source>
</evidence>
<evidence type="ECO:0000256" key="19">
    <source>
        <dbReference type="SAM" id="MobiDB-lite"/>
    </source>
</evidence>
<evidence type="ECO:0000269" key="20">
    <source>
    </source>
</evidence>
<evidence type="ECO:0000269" key="21">
    <source>
    </source>
</evidence>
<evidence type="ECO:0000269" key="22">
    <source>
    </source>
</evidence>
<evidence type="ECO:0000269" key="23">
    <source>
    </source>
</evidence>
<evidence type="ECO:0000269" key="24">
    <source>
    </source>
</evidence>
<evidence type="ECO:0000269" key="25">
    <source>
    </source>
</evidence>
<evidence type="ECO:0000269" key="26">
    <source>
    </source>
</evidence>
<evidence type="ECO:0000269" key="27">
    <source>
    </source>
</evidence>
<evidence type="ECO:0000305" key="28"/>
<evidence type="ECO:0007829" key="29">
    <source>
        <dbReference type="PDB" id="2PX2"/>
    </source>
</evidence>
<evidence type="ECO:0007829" key="30">
    <source>
        <dbReference type="PDB" id="2PX4"/>
    </source>
</evidence>
<evidence type="ECO:0007829" key="31">
    <source>
        <dbReference type="PDB" id="2PX5"/>
    </source>
</evidence>
<evidence type="ECO:0007829" key="32">
    <source>
        <dbReference type="PDB" id="2PXA"/>
    </source>
</evidence>
<evidence type="ECO:0007829" key="33">
    <source>
        <dbReference type="PDB" id="2V8O"/>
    </source>
</evidence>
<evidence type="ECO:0007829" key="34">
    <source>
        <dbReference type="PDB" id="2WV9"/>
    </source>
</evidence>
<comment type="function">
    <molecule>Capsid protein C</molecule>
    <text evidence="7">Plays a role in virus budding by binding to the cell membrane and gathering the viral RNA into a nucleocapsid that forms the core of a mature virus particle. During virus entry, may induce genome penetration into the host cytoplasm after hemifusion induced by the surface proteins. Can migrate to the cell nucleus where it modulates host functions. Overcomes the anti-viral effects of host EXOC1 by sequestering and degrading the latter through the proteasome degradation pathway.</text>
</comment>
<comment type="function">
    <molecule>Capsid protein C</molecule>
    <text evidence="2">Inhibits RNA silencing by interfering with host Dicer.</text>
</comment>
<comment type="function">
    <molecule>Peptide pr</molecule>
    <text evidence="7">Prevents premature fusion activity of envelope proteins in trans-Golgi by binding to envelope protein E at pH6.0. After virion release in extracellular space, gets dissociated from E dimers.</text>
</comment>
<comment type="function">
    <molecule>Protein prM</molecule>
    <text evidence="7">Acts as a chaperone for envelope protein E during intracellular virion assembly by masking and inactivating envelope protein E fusion peptide. prM is the only viral peptide matured by host furin in the trans-Golgi network probably to avoid catastrophic activation of the viral fusion activity in acidic Golgi compartment prior to virion release. prM-E cleavage is inefficient, and many virions are only partially matured. These uncleaved prM would play a role in immune evasion.</text>
</comment>
<comment type="function">
    <molecule>Small envelope protein M</molecule>
    <text evidence="7">May play a role in virus budding. Exerts cytotoxic effects by activating a mitochondrial apoptotic pathway through M ectodomain. May display a viroporin activity.</text>
</comment>
<comment type="function">
    <molecule>Envelope protein E</molecule>
    <text evidence="7">Binds to host cell surface receptor and mediates fusion between viral and cellular membranes. Envelope protein is synthesized in the endoplasmic reticulum in the form of heterodimer with protein prM. They play a role in virion budding in the ER, and the newly formed immature particle is covered with 60 spikes composed of heterodimer between precursor prM and envelope protein E. The virion is transported to the Golgi apparatus where the low pH causes dissociation of PrM-E heterodimers and formation of E homodimers. prM-E cleavage is inefficient, and many virions are only partially matured. These uncleaved prM would play a role in immune evasion.</text>
</comment>
<comment type="function">
    <molecule>Non-structural protein 1</molecule>
    <text evidence="11">Involved in immune evasion, pathogenesis and viral replication. Once cleaved off the polyprotein, is targeted to three destinations: the viral replication cycle, the plasma membrane and the extracellular compartment. Essential for viral replication. Required for formation of the replication complex and recruitment of other non-structural proteins to the ER-derived membrane structures. Excreted as a hexameric lipoparticle that plays a role against host immune response. Antagonizing the complement function. Binds to the host macrophages and dendritic cells. Inhibits signal transduction originating from Toll-like receptor 3 (TLR3).</text>
</comment>
<comment type="function">
    <molecule>Non-structural protein 2A</molecule>
    <text evidence="4">Component of the viral RNA replication complex that functions in virion assembly and antagonizes the host alpha/beta interferon antiviral response.</text>
</comment>
<comment type="function">
    <molecule>Serine protease subunit NS2B</molecule>
    <text evidence="7 16">Required cofactor for the serine protease function of NS3. May have membrane-destabilizing activity and form viroporins (By similarity).</text>
</comment>
<comment type="function">
    <molecule>Serine protease NS3</molecule>
    <text evidence="17 21">Displays three enzymatic activities: serine protease, NTPase and RNA helicase. NS3 serine protease, in association with NS2B, performs its autocleavage and cleaves the polyprotein at dibasic sites in the cytoplasm: C-prM, NS2A-NS2B, NS2B-NS3, NS3-NS4A, NS4A-2K and NS4B-NS5. NS3 RNA helicase binds RNA and unwinds dsRNA in the 3' to 5' direction.</text>
</comment>
<comment type="function">
    <molecule>Non-structural protein 4A</molecule>
    <text evidence="11">Regulates the ATPase activity of the NS3 helicase activity. NS4A allows NS3 helicase to conserve energy during unwinding.</text>
</comment>
<comment type="function">
    <molecule>Peptide 2k</molecule>
    <text evidence="7">Functions as a signal peptide for NS4B and is required for the interferon antagonism activity of the latter.</text>
</comment>
<comment type="function">
    <molecule>Non-structural protein 4B</molecule>
    <text evidence="11">Induces the formation of ER-derived membrane vesicles where the viral replication takes place. Inhibits interferon (IFN)-induced host STAT1 phosphorylation and nuclear translocation, thereby preventing the establishment of cellular antiviral state by blocking the IFN-alpha/beta pathway. Inhibits STAT2 translocation in the nucleus after IFN-alpha treatment.</text>
</comment>
<comment type="function">
    <molecule>RNA-directed RNA polymerase NS5</molecule>
    <text evidence="11">Replicates the viral (+) and (-) RNA genome, and performs the capping of genomes in the cytoplasm. NS5 methylates viral RNA cap at guanine N-7 and ribose 2'-O positions. Besides its role in RNA genome replication, also prevents the establishment of cellular antiviral state by blocking the interferon-alpha/beta (IFN-alpha/beta) signaling pathway. Inhibits host TYK2 and STAT2 phosphorylation, thereby preventing activation of JAK-STAT signaling pathway.</text>
</comment>
<comment type="catalytic activity">
    <reaction>
        <text>Selective hydrolysis of -Xaa-Xaa-|-Yaa- bonds in which each of the Xaa can be either Arg or Lys and Yaa can be either Ser or Ala.</text>
        <dbReference type="EC" id="3.4.21.91"/>
    </reaction>
</comment>
<comment type="catalytic activity">
    <reaction evidence="13">
        <text>RNA(n) + a ribonucleoside 5'-triphosphate = RNA(n+1) + diphosphate</text>
        <dbReference type="Rhea" id="RHEA:21248"/>
        <dbReference type="Rhea" id="RHEA-COMP:14527"/>
        <dbReference type="Rhea" id="RHEA-COMP:17342"/>
        <dbReference type="ChEBI" id="CHEBI:33019"/>
        <dbReference type="ChEBI" id="CHEBI:61557"/>
        <dbReference type="ChEBI" id="CHEBI:140395"/>
        <dbReference type="EC" id="2.7.7.48"/>
    </reaction>
</comment>
<comment type="catalytic activity">
    <reaction>
        <text>a ribonucleoside 5'-triphosphate + H2O = a ribonucleoside 5'-diphosphate + phosphate + H(+)</text>
        <dbReference type="Rhea" id="RHEA:23680"/>
        <dbReference type="ChEBI" id="CHEBI:15377"/>
        <dbReference type="ChEBI" id="CHEBI:15378"/>
        <dbReference type="ChEBI" id="CHEBI:43474"/>
        <dbReference type="ChEBI" id="CHEBI:57930"/>
        <dbReference type="ChEBI" id="CHEBI:61557"/>
        <dbReference type="EC" id="3.6.1.15"/>
    </reaction>
</comment>
<comment type="catalytic activity">
    <reaction evidence="21">
        <text>ATP + H2O = ADP + phosphate + H(+)</text>
        <dbReference type="Rhea" id="RHEA:13065"/>
        <dbReference type="ChEBI" id="CHEBI:15377"/>
        <dbReference type="ChEBI" id="CHEBI:15378"/>
        <dbReference type="ChEBI" id="CHEBI:30616"/>
        <dbReference type="ChEBI" id="CHEBI:43474"/>
        <dbReference type="ChEBI" id="CHEBI:456216"/>
        <dbReference type="EC" id="3.6.4.13"/>
    </reaction>
</comment>
<comment type="catalytic activity">
    <reaction evidence="18">
        <text>a 5'-end (5'-triphosphoguanosine)-ribonucleoside in mRNA + S-adenosyl-L-methionine = a 5'-end (N(7)-methyl 5'-triphosphoguanosine)-ribonucleoside in mRNA + S-adenosyl-L-homocysteine</text>
        <dbReference type="Rhea" id="RHEA:67008"/>
        <dbReference type="Rhea" id="RHEA-COMP:17166"/>
        <dbReference type="Rhea" id="RHEA-COMP:17167"/>
        <dbReference type="ChEBI" id="CHEBI:57856"/>
        <dbReference type="ChEBI" id="CHEBI:59789"/>
        <dbReference type="ChEBI" id="CHEBI:156461"/>
        <dbReference type="ChEBI" id="CHEBI:167617"/>
        <dbReference type="EC" id="2.1.1.56"/>
    </reaction>
</comment>
<comment type="catalytic activity">
    <reaction evidence="18">
        <text>a 5'-end (N(7)-methyl 5'-triphosphoguanosine)-ribonucleoside in mRNA + S-adenosyl-L-methionine = a 5'-end (N(7)-methyl 5'-triphosphoguanosine)-(2'-O-methyl-ribonucleoside) in mRNA + S-adenosyl-L-homocysteine + H(+)</text>
        <dbReference type="Rhea" id="RHEA:67020"/>
        <dbReference type="Rhea" id="RHEA-COMP:17167"/>
        <dbReference type="Rhea" id="RHEA-COMP:17168"/>
        <dbReference type="ChEBI" id="CHEBI:15378"/>
        <dbReference type="ChEBI" id="CHEBI:57856"/>
        <dbReference type="ChEBI" id="CHEBI:59789"/>
        <dbReference type="ChEBI" id="CHEBI:156461"/>
        <dbReference type="ChEBI" id="CHEBI:167609"/>
        <dbReference type="EC" id="2.1.1.57"/>
    </reaction>
</comment>
<comment type="subunit">
    <molecule>Capsid protein C</molecule>
    <text evidence="7">Homodimer (By similarity). Interacts (via N-terminus) with host EXOC1 (via C-terminus); this interaction results in EXOC1 degradation through the proteasome degradation pathway (By similarity).</text>
</comment>
<comment type="subunit">
    <molecule>Protein prM</molecule>
    <text evidence="7">Forms heterodimers with envelope protein E in the endoplasmic reticulum and Golgi.</text>
</comment>
<comment type="subunit">
    <molecule>Envelope protein E</molecule>
    <text evidence="7">Homodimer; in the endoplasmic reticulum and Golgi (By similarity). Interacts with protein prM (By similarity). Interacts with non-structural protein 1 (By similarity).</text>
</comment>
<comment type="subunit">
    <molecule>Non-structural protein 1</molecule>
    <text evidence="11">Homodimer; Homohexamer when secreted (By similarity). Interacts with envelope protein E (By similarity). NS1 interacts with NS4B (By similarity). Interacts with host complement protein CFH; this interaction leads to the degradation of C3 (By similarity).</text>
</comment>
<comment type="subunit">
    <molecule>Non-structural protein 2A</molecule>
    <text evidence="2">Interacts (via N-terminus) with serine protease NS3.</text>
</comment>
<comment type="subunit">
    <molecule>Serine protease subunit NS2B</molecule>
    <text evidence="7">Forms a heterodimer with serine protease NS3 (By similarity). May form homooligomers (By similarity).</text>
</comment>
<comment type="subunit">
    <molecule>Serine protease NS3</molecule>
    <text evidence="7">Forms a heterodimer with NS2B (By similarity). Interacts with non-structural protein 2A (via N-terminus) (By similarity). Interacts with NS4B (By similarity). Interacts with unphosphorylated RNA-directed RNA polymerase NS5; this interaction stimulates RNA-directed RNA polymerase NS5 guanylyltransferase activity (By similarity).</text>
</comment>
<comment type="subunit">
    <molecule>Non-structural protein 4B</molecule>
    <text evidence="7">Interacts with serine protease NS3 (By similarity).</text>
</comment>
<comment type="subunit">
    <molecule>RNA-directed RNA polymerase NS5</molecule>
    <text evidence="7">Homodimer. Interacts with host STAT2; this interaction inhibits the phosphorylation of the latter, and, when all viral proteins are present (polyprotein), targets STAT2 for degradation. Interacts with serine protease NS3.</text>
</comment>
<comment type="subcellular location">
    <molecule>Capsid protein C</molecule>
    <subcellularLocation>
        <location evidence="7">Virion</location>
    </subcellularLocation>
    <subcellularLocation>
        <location evidence="7">Host nucleus</location>
    </subcellularLocation>
    <subcellularLocation>
        <location evidence="3">Host cytoplasm</location>
    </subcellularLocation>
    <subcellularLocation>
        <location evidence="3">Host cytoplasm</location>
        <location evidence="3">Host perinuclear region</location>
    </subcellularLocation>
</comment>
<comment type="subcellular location">
    <molecule>Peptide pr</molecule>
    <subcellularLocation>
        <location evidence="7">Secreted</location>
    </subcellularLocation>
</comment>
<comment type="subcellular location">
    <molecule>Small envelope protein M</molecule>
    <subcellularLocation>
        <location evidence="2">Virion membrane</location>
        <topology evidence="2">Multi-pass membrane protein</topology>
    </subcellularLocation>
    <subcellularLocation>
        <location evidence="2">Host endoplasmic reticulum membrane</location>
        <topology evidence="12">Multi-pass membrane protein</topology>
    </subcellularLocation>
    <text evidence="2">ER membrane retention is mediated by the transmembrane domains.</text>
</comment>
<comment type="subcellular location">
    <molecule>Envelope protein E</molecule>
    <subcellularLocation>
        <location evidence="28">Virion membrane</location>
        <topology evidence="2">Multi-pass membrane protein</topology>
    </subcellularLocation>
    <subcellularLocation>
        <location evidence="2">Host endoplasmic reticulum membrane</location>
        <topology evidence="12">Multi-pass membrane protein</topology>
    </subcellularLocation>
    <text evidence="2">ER membrane retention is mediated by the transmembrane domains.</text>
</comment>
<comment type="subcellular location">
    <molecule>Non-structural protein 1</molecule>
    <subcellularLocation>
        <location evidence="7">Secreted</location>
    </subcellularLocation>
    <subcellularLocation>
        <location>Host endoplasmic reticulum membrane</location>
        <topology>Peripheral membrane protein</topology>
        <orientation evidence="7">Lumenal side</orientation>
    </subcellularLocation>
    <text evidence="11">Located in RE-derived vesicles hosting the replication complex.</text>
</comment>
<comment type="subcellular location">
    <molecule>Non-structural protein 2A</molecule>
    <subcellularLocation>
        <location evidence="4">Host endoplasmic reticulum membrane</location>
        <topology evidence="7">Multi-pass membrane protein</topology>
    </subcellularLocation>
</comment>
<comment type="subcellular location">
    <molecule>Serine protease subunit NS2B</molecule>
    <subcellularLocation>
        <location>Host endoplasmic reticulum membrane</location>
        <topology evidence="7">Multi-pass membrane protein</topology>
    </subcellularLocation>
</comment>
<comment type="subcellular location">
    <molecule>Serine protease NS3</molecule>
    <subcellularLocation>
        <location evidence="17">Host endoplasmic reticulum membrane</location>
        <topology evidence="17">Peripheral membrane protein</topology>
        <orientation evidence="17">Cytoplasmic side</orientation>
    </subcellularLocation>
    <text evidence="17">Remains non-covalently associated to serine protease subunit NS2B.</text>
</comment>
<comment type="subcellular location">
    <molecule>Non-structural protein 4A</molecule>
    <subcellularLocation>
        <location evidence="4">Host endoplasmic reticulum membrane</location>
        <topology evidence="7">Multi-pass membrane protein</topology>
    </subcellularLocation>
    <text evidence="7">Located in RE-associated vesicles hosting the replication complex.</text>
</comment>
<comment type="subcellular location">
    <molecule>Non-structural protein 4B</molecule>
    <subcellularLocation>
        <location evidence="7">Host endoplasmic reticulum membrane</location>
        <topology evidence="7">Multi-pass membrane protein</topology>
    </subcellularLocation>
    <text evidence="11">Located in RE-derived vesicles hosting the replication complex.</text>
</comment>
<comment type="subcellular location">
    <molecule>RNA-directed RNA polymerase NS5</molecule>
    <subcellularLocation>
        <location>Host endoplasmic reticulum membrane</location>
        <topology>Peripheral membrane protein</topology>
        <orientation>Cytoplasmic side</orientation>
    </subcellularLocation>
    <subcellularLocation>
        <location evidence="3">Host nucleus</location>
    </subcellularLocation>
    <text evidence="7">Located in RE-associated vesicles hosting the replication complex. NS5 protein is mainly localized in the nucleus rather than in ER vesicles.</text>
</comment>
<comment type="domain">
    <text evidence="7">The transmembrane domains of the small envelope protein M and envelope protein E contain an endoplasmic reticulum retention signal.</text>
</comment>
<comment type="PTM">
    <molecule>Genome polyprotein</molecule>
    <text evidence="22 24 25 26 27">Specific enzymatic cleavages in vivo yield mature proteins. Cleavages in the lumen of endoplasmic reticulum are performed by host signal peptidase, whereas cleavages in the cytoplasmic side are performed by serine protease NS3. Signal cleavage at the 2K-4B site requires a prior NS3 protease-mediated cleavage at the 4A-2K site.</text>
</comment>
<comment type="PTM">
    <molecule>Protein prM</molecule>
    <text evidence="7">Cleaved in post-Golgi vesicles by a host furin, releasing the mature small envelope protein M, and peptide pr. This cleavage is incomplete as up to 30% of viral particles still carry uncleaved prM.</text>
</comment>
<comment type="PTM">
    <molecule>Envelope protein E</molecule>
    <text evidence="23">N-glycosylated.</text>
</comment>
<comment type="PTM">
    <molecule>Non-structural protein 1</molecule>
    <text evidence="7 20">N-glycosylated (PubMed:11514736). The excreted form is glycosylated and this is required for efficient secretion of the protein from infected cells (By similarity).</text>
</comment>
<comment type="PTM">
    <molecule>Serine protease NS3</molecule>
    <text evidence="9">Acetylated by host KAT5. Acetylation modulates NS3 RNA-binding and unwinding activities and plays an important positive role for viral replication.</text>
</comment>
<comment type="PTM">
    <molecule>RNA-directed RNA polymerase NS5</molecule>
    <text evidence="7">Phosphorylated on serines residues. This phosphorylation may trigger NS5 nuclear localization.</text>
</comment>
<comment type="similarity">
    <text evidence="18">In the N-terminal section; belongs to the class I-like SAM-binding methyltransferase superfamily. mRNA cap 0-1 NS5-type methyltransferase family.</text>
</comment>
<name>POLG_MVEV5</name>
<organism>
    <name type="scientific">Murray valley encephalitis virus (strain MVE-1-51)</name>
    <name type="common">MVEV</name>
    <dbReference type="NCBI Taxonomy" id="301478"/>
    <lineage>
        <taxon>Viruses</taxon>
        <taxon>Riboviria</taxon>
        <taxon>Orthornavirae</taxon>
        <taxon>Kitrinoviricota</taxon>
        <taxon>Flasuviricetes</taxon>
        <taxon>Amarillovirales</taxon>
        <taxon>Flaviviridae</taxon>
        <taxon>Orthoflavivirus</taxon>
        <taxon>Orthoflavivirus murrayense</taxon>
        <taxon>Murray Valley encephalitis virus</taxon>
    </lineage>
</organism>